<name>P2RX7_HUMAN</name>
<dbReference type="EMBL" id="Y09561">
    <property type="protein sequence ID" value="CAA70755.1"/>
    <property type="molecule type" value="mRNA"/>
</dbReference>
<dbReference type="EMBL" id="Y12851">
    <property type="protein sequence ID" value="CAA73360.1"/>
    <property type="molecule type" value="Genomic_DNA"/>
</dbReference>
<dbReference type="EMBL" id="Y12852">
    <property type="protein sequence ID" value="CAA73360.1"/>
    <property type="status" value="JOINED"/>
    <property type="molecule type" value="Genomic_DNA"/>
</dbReference>
<dbReference type="EMBL" id="Y12853">
    <property type="protein sequence ID" value="CAA73360.1"/>
    <property type="status" value="JOINED"/>
    <property type="molecule type" value="Genomic_DNA"/>
</dbReference>
<dbReference type="EMBL" id="Y12854">
    <property type="protein sequence ID" value="CAA73360.1"/>
    <property type="status" value="JOINED"/>
    <property type="molecule type" value="Genomic_DNA"/>
</dbReference>
<dbReference type="EMBL" id="Y12855">
    <property type="protein sequence ID" value="CAA73360.1"/>
    <property type="status" value="JOINED"/>
    <property type="molecule type" value="Genomic_DNA"/>
</dbReference>
<dbReference type="EMBL" id="AY847298">
    <property type="protein sequence ID" value="AAX82087.1"/>
    <property type="molecule type" value="mRNA"/>
</dbReference>
<dbReference type="EMBL" id="AY847299">
    <property type="protein sequence ID" value="AAX82088.1"/>
    <property type="molecule type" value="mRNA"/>
</dbReference>
<dbReference type="EMBL" id="AY847300">
    <property type="protein sequence ID" value="AAX82089.1"/>
    <property type="molecule type" value="mRNA"/>
</dbReference>
<dbReference type="EMBL" id="AY847301">
    <property type="protein sequence ID" value="AAX82090.1"/>
    <property type="molecule type" value="mRNA"/>
</dbReference>
<dbReference type="EMBL" id="AY847302">
    <property type="protein sequence ID" value="AAX82091.1"/>
    <property type="molecule type" value="mRNA"/>
</dbReference>
<dbReference type="EMBL" id="AY847303">
    <property type="protein sequence ID" value="AAX82092.1"/>
    <property type="molecule type" value="mRNA"/>
</dbReference>
<dbReference type="EMBL" id="AY847304">
    <property type="protein sequence ID" value="AAX82093.1"/>
    <property type="molecule type" value="mRNA"/>
</dbReference>
<dbReference type="EMBL" id="AK290405">
    <property type="protein sequence ID" value="BAF83094.1"/>
    <property type="molecule type" value="mRNA"/>
</dbReference>
<dbReference type="EMBL" id="AK294126">
    <property type="protein sequence ID" value="BAH11678.1"/>
    <property type="molecule type" value="mRNA"/>
</dbReference>
<dbReference type="EMBL" id="AC069209">
    <property type="status" value="NOT_ANNOTATED_CDS"/>
    <property type="molecule type" value="Genomic_DNA"/>
</dbReference>
<dbReference type="EMBL" id="DQ399293">
    <property type="protein sequence ID" value="ABD59798.1"/>
    <property type="molecule type" value="mRNA"/>
</dbReference>
<dbReference type="EMBL" id="MK465690">
    <property type="protein sequence ID" value="QEI47445.1"/>
    <property type="molecule type" value="mRNA"/>
</dbReference>
<dbReference type="EMBL" id="AC079602">
    <property type="status" value="NOT_ANNOTATED_CDS"/>
    <property type="molecule type" value="Genomic_DNA"/>
</dbReference>
<dbReference type="EMBL" id="Z98941">
    <property type="status" value="NOT_ANNOTATED_CDS"/>
    <property type="molecule type" value="Genomic_DNA"/>
</dbReference>
<dbReference type="EMBL" id="BC007679">
    <property type="protein sequence ID" value="AAH07679.1"/>
    <property type="molecule type" value="mRNA"/>
</dbReference>
<dbReference type="EMBL" id="BC011913">
    <property type="protein sequence ID" value="AAH11913.1"/>
    <property type="molecule type" value="mRNA"/>
</dbReference>
<dbReference type="CCDS" id="CCDS9213.1">
    <molecule id="Q99572-1"/>
</dbReference>
<dbReference type="RefSeq" id="NP_002553.3">
    <molecule id="Q99572-1"/>
    <property type="nucleotide sequence ID" value="NM_002562.5"/>
</dbReference>
<dbReference type="RefSeq" id="XP_011536722.1">
    <property type="nucleotide sequence ID" value="XM_011538420.2"/>
</dbReference>
<dbReference type="SASBDB" id="Q99572"/>
<dbReference type="SMR" id="Q99572"/>
<dbReference type="BioGRID" id="111066">
    <property type="interactions" value="17"/>
</dbReference>
<dbReference type="CORUM" id="Q99572"/>
<dbReference type="ELM" id="Q99572"/>
<dbReference type="FunCoup" id="Q99572">
    <property type="interactions" value="923"/>
</dbReference>
<dbReference type="IntAct" id="Q99572">
    <property type="interactions" value="17"/>
</dbReference>
<dbReference type="STRING" id="9606.ENSP00000330696"/>
<dbReference type="BindingDB" id="Q99572"/>
<dbReference type="ChEMBL" id="CHEMBL4805"/>
<dbReference type="DrugBank" id="DB12594">
    <property type="generic name" value="AZD-9056"/>
</dbReference>
<dbReference type="DrugBank" id="DB12113">
    <property type="generic name" value="CE-224535"/>
</dbReference>
<dbReference type="DrugBank" id="DB17024">
    <property type="generic name" value="Chelerythrine"/>
</dbReference>
<dbReference type="DrugBank" id="DB15358">
    <property type="generic name" value="JNJ-54175446"/>
</dbReference>
<dbReference type="DrugBank" id="DB01069">
    <property type="generic name" value="Promethazine"/>
</dbReference>
<dbReference type="DrugCentral" id="Q99572"/>
<dbReference type="GuidetoPHARMACOLOGY" id="484"/>
<dbReference type="TCDB" id="1.A.7.1.3">
    <property type="family name" value="the atp-gated p2x receptor cation channel (p2x receptor) family"/>
</dbReference>
<dbReference type="GlyConnect" id="1591">
    <property type="glycosylation" value="1 N-Linked glycan (1 site)"/>
</dbReference>
<dbReference type="GlyCosmos" id="Q99572">
    <property type="glycosylation" value="5 sites, 1 glycan"/>
</dbReference>
<dbReference type="GlyGen" id="Q99572">
    <property type="glycosylation" value="7 sites, 11 N-linked glycans (4 sites)"/>
</dbReference>
<dbReference type="iPTMnet" id="Q99572"/>
<dbReference type="PhosphoSitePlus" id="Q99572"/>
<dbReference type="SwissPalm" id="Q99572"/>
<dbReference type="BioMuta" id="P2RX7"/>
<dbReference type="DMDM" id="395398617"/>
<dbReference type="CPTAC" id="CPTAC-2229"/>
<dbReference type="MassIVE" id="Q99572"/>
<dbReference type="PaxDb" id="9606-ENSP00000330696"/>
<dbReference type="PeptideAtlas" id="Q99572"/>
<dbReference type="ProteomicsDB" id="16961"/>
<dbReference type="ProteomicsDB" id="27247"/>
<dbReference type="ProteomicsDB" id="27466"/>
<dbReference type="ProteomicsDB" id="30262"/>
<dbReference type="ProteomicsDB" id="62309"/>
<dbReference type="ProteomicsDB" id="78332">
    <molecule id="Q99572-1"/>
</dbReference>
<dbReference type="ABCD" id="Q99572">
    <property type="antibodies" value="12 sequenced antibodies"/>
</dbReference>
<dbReference type="Antibodypedia" id="19042">
    <property type="antibodies" value="479 antibodies from 42 providers"/>
</dbReference>
<dbReference type="DNASU" id="5027"/>
<dbReference type="Ensembl" id="ENST00000328963.10">
    <molecule id="Q99572-1"/>
    <property type="protein sequence ID" value="ENSP00000330696.6"/>
    <property type="gene ID" value="ENSG00000089041.17"/>
</dbReference>
<dbReference type="Ensembl" id="ENST00000535250.5">
    <molecule id="Q99572-2"/>
    <property type="protein sequence ID" value="ENSP00000442572.2"/>
    <property type="gene ID" value="ENSG00000089041.17"/>
</dbReference>
<dbReference type="Ensembl" id="ENST00000535600.2">
    <molecule id="Q99572-5"/>
    <property type="protein sequence ID" value="ENSP00000442470.1"/>
    <property type="gene ID" value="ENSG00000089041.17"/>
</dbReference>
<dbReference type="Ensembl" id="ENST00000541022.5">
    <molecule id="Q99572-3"/>
    <property type="protein sequence ID" value="ENSP00000441230.1"/>
    <property type="gene ID" value="ENSG00000089041.17"/>
</dbReference>
<dbReference type="Ensembl" id="ENST00000541564.5">
    <molecule id="Q99572-9"/>
    <property type="protein sequence ID" value="ENSP00000443640.1"/>
    <property type="gene ID" value="ENSG00000089041.17"/>
</dbReference>
<dbReference type="Ensembl" id="ENST00000541716.5">
    <molecule id="Q99572-3"/>
    <property type="protein sequence ID" value="ENSP00000437729.1"/>
    <property type="gene ID" value="ENSG00000089041.17"/>
</dbReference>
<dbReference type="GeneID" id="5027"/>
<dbReference type="KEGG" id="hsa:5027"/>
<dbReference type="MANE-Select" id="ENST00000328963.10">
    <property type="protein sequence ID" value="ENSP00000330696.6"/>
    <property type="RefSeq nucleotide sequence ID" value="NM_002562.6"/>
    <property type="RefSeq protein sequence ID" value="NP_002553.3"/>
</dbReference>
<dbReference type="UCSC" id="uc001tzm.4">
    <molecule id="Q99572-1"/>
    <property type="organism name" value="human"/>
</dbReference>
<dbReference type="AGR" id="HGNC:8537"/>
<dbReference type="CTD" id="5027"/>
<dbReference type="DisGeNET" id="5027"/>
<dbReference type="GeneCards" id="P2RX7"/>
<dbReference type="HGNC" id="HGNC:8537">
    <property type="gene designation" value="P2RX7"/>
</dbReference>
<dbReference type="HPA" id="ENSG00000089041">
    <property type="expression patterns" value="Tissue enhanced (brain)"/>
</dbReference>
<dbReference type="MalaCards" id="P2RX7"/>
<dbReference type="MIM" id="602566">
    <property type="type" value="gene"/>
</dbReference>
<dbReference type="neXtProt" id="NX_Q99572"/>
<dbReference type="OpenTargets" id="ENSG00000089041"/>
<dbReference type="Orphanet" id="67038">
    <property type="disease" value="B-cell chronic lymphocytic leukemia"/>
</dbReference>
<dbReference type="PharmGKB" id="PA32866"/>
<dbReference type="VEuPathDB" id="HostDB:ENSG00000089041"/>
<dbReference type="eggNOG" id="ENOG502QSBN">
    <property type="taxonomic scope" value="Eukaryota"/>
</dbReference>
<dbReference type="GeneTree" id="ENSGT01020000230351"/>
<dbReference type="HOGENOM" id="CLU_034469_7_0_1"/>
<dbReference type="InParanoid" id="Q99572"/>
<dbReference type="OMA" id="CNLDSWF"/>
<dbReference type="OrthoDB" id="494673at2759"/>
<dbReference type="PAN-GO" id="Q99572">
    <property type="GO annotations" value="2 GO annotations based on evolutionary models"/>
</dbReference>
<dbReference type="TreeFam" id="TF328633"/>
<dbReference type="PathwayCommons" id="Q99572"/>
<dbReference type="Reactome" id="R-HSA-139853">
    <property type="pathway name" value="Elevation of cytosolic Ca2+ levels"/>
</dbReference>
<dbReference type="Reactome" id="R-HSA-418346">
    <property type="pathway name" value="Platelet homeostasis"/>
</dbReference>
<dbReference type="Reactome" id="R-HSA-844456">
    <property type="pathway name" value="The NLRP3 inflammasome"/>
</dbReference>
<dbReference type="Reactome" id="R-HSA-9660826">
    <property type="pathway name" value="Purinergic signaling in leishmaniasis infection"/>
</dbReference>
<dbReference type="Reactome" id="R-HSA-9856532">
    <property type="pathway name" value="Mechanical load activates signaling by PIEZO1 and integrins in osteocytes"/>
</dbReference>
<dbReference type="SignaLink" id="Q99572"/>
<dbReference type="SIGNOR" id="Q99572"/>
<dbReference type="BioGRID-ORCS" id="5027">
    <property type="hits" value="34 hits in 1156 CRISPR screens"/>
</dbReference>
<dbReference type="ChiTaRS" id="P2RX7">
    <property type="organism name" value="human"/>
</dbReference>
<dbReference type="GeneWiki" id="P2RX7"/>
<dbReference type="GenomeRNAi" id="5027"/>
<dbReference type="Pharos" id="Q99572">
    <property type="development level" value="Tchem"/>
</dbReference>
<dbReference type="PRO" id="PR:Q99572"/>
<dbReference type="Proteomes" id="UP000005640">
    <property type="component" value="Chromosome 12"/>
</dbReference>
<dbReference type="RNAct" id="Q99572">
    <property type="molecule type" value="protein"/>
</dbReference>
<dbReference type="Bgee" id="ENSG00000089041">
    <property type="expression patterns" value="Expressed in inferior vagus X ganglion and 167 other cell types or tissues"/>
</dbReference>
<dbReference type="ExpressionAtlas" id="Q99572">
    <property type="expression patterns" value="baseline and differential"/>
</dbReference>
<dbReference type="GO" id="GO:0032059">
    <property type="term" value="C:bleb"/>
    <property type="evidence" value="ECO:0000250"/>
    <property type="project" value="BHF-UCL"/>
</dbReference>
<dbReference type="GO" id="GO:0005911">
    <property type="term" value="C:cell-cell junction"/>
    <property type="evidence" value="ECO:0007669"/>
    <property type="project" value="Ensembl"/>
</dbReference>
<dbReference type="GO" id="GO:0005737">
    <property type="term" value="C:cytoplasm"/>
    <property type="evidence" value="ECO:0000250"/>
    <property type="project" value="BHF-UCL"/>
</dbReference>
<dbReference type="GO" id="GO:0009897">
    <property type="term" value="C:external side of plasma membrane"/>
    <property type="evidence" value="ECO:0007669"/>
    <property type="project" value="Ensembl"/>
</dbReference>
<dbReference type="GO" id="GO:0016020">
    <property type="term" value="C:membrane"/>
    <property type="evidence" value="ECO:0000314"/>
    <property type="project" value="BHF-UCL"/>
</dbReference>
<dbReference type="GO" id="GO:0005739">
    <property type="term" value="C:mitochondrion"/>
    <property type="evidence" value="ECO:0007669"/>
    <property type="project" value="GOC"/>
</dbReference>
<dbReference type="GO" id="GO:0031594">
    <property type="term" value="C:neuromuscular junction"/>
    <property type="evidence" value="ECO:0007669"/>
    <property type="project" value="Ensembl"/>
</dbReference>
<dbReference type="GO" id="GO:0043025">
    <property type="term" value="C:neuronal cell body"/>
    <property type="evidence" value="ECO:0007669"/>
    <property type="project" value="Ensembl"/>
</dbReference>
<dbReference type="GO" id="GO:0005886">
    <property type="term" value="C:plasma membrane"/>
    <property type="evidence" value="ECO:0000314"/>
    <property type="project" value="UniProtKB"/>
</dbReference>
<dbReference type="GO" id="GO:0098794">
    <property type="term" value="C:postsynapse"/>
    <property type="evidence" value="ECO:0007669"/>
    <property type="project" value="GOC"/>
</dbReference>
<dbReference type="GO" id="GO:0098793">
    <property type="term" value="C:presynapse"/>
    <property type="evidence" value="ECO:0007669"/>
    <property type="project" value="GOC"/>
</dbReference>
<dbReference type="GO" id="GO:0005524">
    <property type="term" value="F:ATP binding"/>
    <property type="evidence" value="ECO:0000305"/>
    <property type="project" value="BHF-UCL"/>
</dbReference>
<dbReference type="GO" id="GO:0004931">
    <property type="term" value="F:extracellularly ATP-gated monoatomic cation channel activity"/>
    <property type="evidence" value="ECO:0000314"/>
    <property type="project" value="UniProtKB"/>
</dbReference>
<dbReference type="GO" id="GO:0042802">
    <property type="term" value="F:identical protein binding"/>
    <property type="evidence" value="ECO:0000250"/>
    <property type="project" value="BHF-UCL"/>
</dbReference>
<dbReference type="GO" id="GO:0001530">
    <property type="term" value="F:lipopolysaccharide binding"/>
    <property type="evidence" value="ECO:0000250"/>
    <property type="project" value="BHF-UCL"/>
</dbReference>
<dbReference type="GO" id="GO:0005216">
    <property type="term" value="F:monoatomic ion channel activity"/>
    <property type="evidence" value="ECO:0007669"/>
    <property type="project" value="InterPro"/>
</dbReference>
<dbReference type="GO" id="GO:0005267">
    <property type="term" value="F:potassium channel activity"/>
    <property type="evidence" value="ECO:0000314"/>
    <property type="project" value="UniProtKB"/>
</dbReference>
<dbReference type="GO" id="GO:0001614">
    <property type="term" value="F:purinergic nucleotide receptor activity"/>
    <property type="evidence" value="ECO:0000314"/>
    <property type="project" value="BHF-UCL"/>
</dbReference>
<dbReference type="GO" id="GO:0005102">
    <property type="term" value="F:signaling receptor binding"/>
    <property type="evidence" value="ECO:0000250"/>
    <property type="project" value="BHF-UCL"/>
</dbReference>
<dbReference type="GO" id="GO:0005272">
    <property type="term" value="F:sodium channel activity"/>
    <property type="evidence" value="ECO:0000314"/>
    <property type="project" value="UniProtKB"/>
</dbReference>
<dbReference type="GO" id="GO:0097190">
    <property type="term" value="P:apoptotic signaling pathway"/>
    <property type="evidence" value="ECO:0000250"/>
    <property type="project" value="BHF-UCL"/>
</dbReference>
<dbReference type="GO" id="GO:0032060">
    <property type="term" value="P:bleb assembly"/>
    <property type="evidence" value="ECO:0000314"/>
    <property type="project" value="UniProtKB"/>
</dbReference>
<dbReference type="GO" id="GO:0070588">
    <property type="term" value="P:calcium ion transmembrane transport"/>
    <property type="evidence" value="ECO:0000318"/>
    <property type="project" value="GO_Central"/>
</dbReference>
<dbReference type="GO" id="GO:0019722">
    <property type="term" value="P:calcium-mediated signaling"/>
    <property type="evidence" value="ECO:0000304"/>
    <property type="project" value="ARUK-UCL"/>
</dbReference>
<dbReference type="GO" id="GO:0000902">
    <property type="term" value="P:cell morphogenesis"/>
    <property type="evidence" value="ECO:0007669"/>
    <property type="project" value="Ensembl"/>
</dbReference>
<dbReference type="GO" id="GO:0007166">
    <property type="term" value="P:cell surface receptor signaling pathway"/>
    <property type="evidence" value="ECO:0000250"/>
    <property type="project" value="BHF-UCL"/>
</dbReference>
<dbReference type="GO" id="GO:0071318">
    <property type="term" value="P:cellular response to ATP"/>
    <property type="evidence" value="ECO:0000304"/>
    <property type="project" value="ARUK-UCL"/>
</dbReference>
<dbReference type="GO" id="GO:0071359">
    <property type="term" value="P:cellular response to dsRNA"/>
    <property type="evidence" value="ECO:0007669"/>
    <property type="project" value="Ensembl"/>
</dbReference>
<dbReference type="GO" id="GO:0046513">
    <property type="term" value="P:ceramide biosynthetic process"/>
    <property type="evidence" value="ECO:0007669"/>
    <property type="project" value="Ensembl"/>
</dbReference>
<dbReference type="GO" id="GO:0032963">
    <property type="term" value="P:collagen metabolic process"/>
    <property type="evidence" value="ECO:0007669"/>
    <property type="project" value="Ensembl"/>
</dbReference>
<dbReference type="GO" id="GO:0050830">
    <property type="term" value="P:defense response to Gram-positive bacterium"/>
    <property type="evidence" value="ECO:0007669"/>
    <property type="project" value="Ensembl"/>
</dbReference>
<dbReference type="GO" id="GO:0097191">
    <property type="term" value="P:extrinsic apoptotic signaling pathway"/>
    <property type="evidence" value="ECO:0000250"/>
    <property type="project" value="BHF-UCL"/>
</dbReference>
<dbReference type="GO" id="GO:0014051">
    <property type="term" value="P:gamma-aminobutyric acid secretion"/>
    <property type="evidence" value="ECO:0007669"/>
    <property type="project" value="Ensembl"/>
</dbReference>
<dbReference type="GO" id="GO:0014047">
    <property type="term" value="P:glutamate secretion"/>
    <property type="evidence" value="ECO:0007669"/>
    <property type="project" value="Ensembl"/>
</dbReference>
<dbReference type="GO" id="GO:0048873">
    <property type="term" value="P:homeostasis of number of cells within a tissue"/>
    <property type="evidence" value="ECO:0007669"/>
    <property type="project" value="Ensembl"/>
</dbReference>
<dbReference type="GO" id="GO:0006954">
    <property type="term" value="P:inflammatory response"/>
    <property type="evidence" value="ECO:0007669"/>
    <property type="project" value="Ensembl"/>
</dbReference>
<dbReference type="GO" id="GO:0000165">
    <property type="term" value="P:MAPK cascade"/>
    <property type="evidence" value="ECO:0007669"/>
    <property type="project" value="Ensembl"/>
</dbReference>
<dbReference type="GO" id="GO:0051899">
    <property type="term" value="P:membrane depolarization"/>
    <property type="evidence" value="ECO:0000314"/>
    <property type="project" value="BHF-UCL"/>
</dbReference>
<dbReference type="GO" id="GO:0006509">
    <property type="term" value="P:membrane protein ectodomain proteolysis"/>
    <property type="evidence" value="ECO:0007669"/>
    <property type="project" value="Ensembl"/>
</dbReference>
<dbReference type="GO" id="GO:0051882">
    <property type="term" value="P:mitochondrial depolarization"/>
    <property type="evidence" value="ECO:0007669"/>
    <property type="project" value="Ensembl"/>
</dbReference>
<dbReference type="GO" id="GO:0007005">
    <property type="term" value="P:mitochondrion organization"/>
    <property type="evidence" value="ECO:0007669"/>
    <property type="project" value="Ensembl"/>
</dbReference>
<dbReference type="GO" id="GO:0043132">
    <property type="term" value="P:NAD transport"/>
    <property type="evidence" value="ECO:0007669"/>
    <property type="project" value="Ensembl"/>
</dbReference>
<dbReference type="GO" id="GO:0045779">
    <property type="term" value="P:negative regulation of bone resorption"/>
    <property type="evidence" value="ECO:0000250"/>
    <property type="project" value="BHF-UCL"/>
</dbReference>
<dbReference type="GO" id="GO:0045794">
    <property type="term" value="P:negative regulation of cell volume"/>
    <property type="evidence" value="ECO:0000315"/>
    <property type="project" value="UniProtKB"/>
</dbReference>
<dbReference type="GO" id="GO:0043409">
    <property type="term" value="P:negative regulation of MAPK cascade"/>
    <property type="evidence" value="ECO:0000250"/>
    <property type="project" value="BHF-UCL"/>
</dbReference>
<dbReference type="GO" id="GO:0001845">
    <property type="term" value="P:phagolysosome assembly"/>
    <property type="evidence" value="ECO:0007669"/>
    <property type="project" value="Ensembl"/>
</dbReference>
<dbReference type="GO" id="GO:0006649">
    <property type="term" value="P:phospholipid transfer to membrane"/>
    <property type="evidence" value="ECO:0007669"/>
    <property type="project" value="Ensembl"/>
</dbReference>
<dbReference type="GO" id="GO:0017121">
    <property type="term" value="P:plasma membrane phospholipid scrambling"/>
    <property type="evidence" value="ECO:0000314"/>
    <property type="project" value="UniProtKB"/>
</dbReference>
<dbReference type="GO" id="GO:0046931">
    <property type="term" value="P:pore complex assembly"/>
    <property type="evidence" value="ECO:0000314"/>
    <property type="project" value="BHF-UCL"/>
</dbReference>
<dbReference type="GO" id="GO:1904172">
    <property type="term" value="P:positive regulation of bleb assembly"/>
    <property type="evidence" value="ECO:0000315"/>
    <property type="project" value="UniProtKB"/>
</dbReference>
<dbReference type="GO" id="GO:0030501">
    <property type="term" value="P:positive regulation of bone mineralization"/>
    <property type="evidence" value="ECO:0000250"/>
    <property type="project" value="BHF-UCL"/>
</dbReference>
<dbReference type="GO" id="GO:0010524">
    <property type="term" value="P:positive regulation of calcium ion transport into cytosol"/>
    <property type="evidence" value="ECO:0000314"/>
    <property type="project" value="BHF-UCL"/>
</dbReference>
<dbReference type="GO" id="GO:0051495">
    <property type="term" value="P:positive regulation of cytoskeleton organization"/>
    <property type="evidence" value="ECO:0000250"/>
    <property type="project" value="BHF-UCL"/>
</dbReference>
<dbReference type="GO" id="GO:0014054">
    <property type="term" value="P:positive regulation of gamma-aminobutyric acid secretion"/>
    <property type="evidence" value="ECO:0007669"/>
    <property type="project" value="Ensembl"/>
</dbReference>
<dbReference type="GO" id="GO:0010628">
    <property type="term" value="P:positive regulation of gene expression"/>
    <property type="evidence" value="ECO:0000315"/>
    <property type="project" value="CACAO"/>
</dbReference>
<dbReference type="GO" id="GO:0014049">
    <property type="term" value="P:positive regulation of glutamate secretion"/>
    <property type="evidence" value="ECO:0007669"/>
    <property type="project" value="Ensembl"/>
</dbReference>
<dbReference type="GO" id="GO:0045821">
    <property type="term" value="P:positive regulation of glycolytic process"/>
    <property type="evidence" value="ECO:0000315"/>
    <property type="project" value="CACAO"/>
</dbReference>
<dbReference type="GO" id="GO:0032730">
    <property type="term" value="P:positive regulation of interleukin-1 alpha production"/>
    <property type="evidence" value="ECO:0007669"/>
    <property type="project" value="Ensembl"/>
</dbReference>
<dbReference type="GO" id="GO:0032731">
    <property type="term" value="P:positive regulation of interleukin-1 beta production"/>
    <property type="evidence" value="ECO:0000314"/>
    <property type="project" value="BHF-UCL"/>
</dbReference>
<dbReference type="GO" id="GO:0032755">
    <property type="term" value="P:positive regulation of interleukin-6 production"/>
    <property type="evidence" value="ECO:0007669"/>
    <property type="project" value="Ensembl"/>
</dbReference>
<dbReference type="GO" id="GO:0060907">
    <property type="term" value="P:positive regulation of macrophage cytokine production"/>
    <property type="evidence" value="ECO:0007669"/>
    <property type="project" value="Ensembl"/>
</dbReference>
<dbReference type="GO" id="GO:0043410">
    <property type="term" value="P:positive regulation of MAPK cascade"/>
    <property type="evidence" value="ECO:0007669"/>
    <property type="project" value="Ensembl"/>
</dbReference>
<dbReference type="GO" id="GO:0051901">
    <property type="term" value="P:positive regulation of mitochondrial depolarization"/>
    <property type="evidence" value="ECO:0007669"/>
    <property type="project" value="Ensembl"/>
</dbReference>
<dbReference type="GO" id="GO:0034767">
    <property type="term" value="P:positive regulation of monoatomic ion transmembrane transport"/>
    <property type="evidence" value="ECO:0000315"/>
    <property type="project" value="UniProtKB"/>
</dbReference>
<dbReference type="GO" id="GO:1900227">
    <property type="term" value="P:positive regulation of NLRP3 inflammasome complex assembly"/>
    <property type="evidence" value="ECO:0000250"/>
    <property type="project" value="UniProtKB"/>
</dbReference>
<dbReference type="GO" id="GO:0032308">
    <property type="term" value="P:positive regulation of prostaglandin secretion"/>
    <property type="evidence" value="ECO:0007669"/>
    <property type="project" value="Ensembl"/>
</dbReference>
<dbReference type="GO" id="GO:0050714">
    <property type="term" value="P:positive regulation of protein secretion"/>
    <property type="evidence" value="ECO:0007669"/>
    <property type="project" value="Ensembl"/>
</dbReference>
<dbReference type="GO" id="GO:0070234">
    <property type="term" value="P:positive regulation of T cell apoptotic process"/>
    <property type="evidence" value="ECO:0007669"/>
    <property type="project" value="Ensembl"/>
</dbReference>
<dbReference type="GO" id="GO:0001916">
    <property type="term" value="P:positive regulation of T cell mediated cytotoxicity"/>
    <property type="evidence" value="ECO:0007669"/>
    <property type="project" value="Ensembl"/>
</dbReference>
<dbReference type="GO" id="GO:0032310">
    <property type="term" value="P:prostaglandin secretion"/>
    <property type="evidence" value="ECO:0007669"/>
    <property type="project" value="Ensembl"/>
</dbReference>
<dbReference type="GO" id="GO:0030163">
    <property type="term" value="P:protein catabolic process"/>
    <property type="evidence" value="ECO:0007669"/>
    <property type="project" value="Ensembl"/>
</dbReference>
<dbReference type="GO" id="GO:0070207">
    <property type="term" value="P:protein homotrimerization"/>
    <property type="evidence" value="ECO:0000314"/>
    <property type="project" value="UniProtKB"/>
</dbReference>
<dbReference type="GO" id="GO:0016485">
    <property type="term" value="P:protein processing"/>
    <property type="evidence" value="ECO:0007669"/>
    <property type="project" value="Ensembl"/>
</dbReference>
<dbReference type="GO" id="GO:0009306">
    <property type="term" value="P:protein secretion"/>
    <property type="evidence" value="ECO:0007669"/>
    <property type="project" value="Ensembl"/>
</dbReference>
<dbReference type="GO" id="GO:0035590">
    <property type="term" value="P:purinergic nucleotide receptor signaling pathway"/>
    <property type="evidence" value="ECO:0000315"/>
    <property type="project" value="UniProtKB"/>
</dbReference>
<dbReference type="GO" id="GO:0072593">
    <property type="term" value="P:reactive oxygen species metabolic process"/>
    <property type="evidence" value="ECO:0007669"/>
    <property type="project" value="Ensembl"/>
</dbReference>
<dbReference type="GO" id="GO:0002028">
    <property type="term" value="P:regulation of sodium ion transport"/>
    <property type="evidence" value="ECO:0000250"/>
    <property type="project" value="BHF-UCL"/>
</dbReference>
<dbReference type="GO" id="GO:0051209">
    <property type="term" value="P:release of sequestered calcium ion into cytosol"/>
    <property type="evidence" value="ECO:0007669"/>
    <property type="project" value="Ensembl"/>
</dbReference>
<dbReference type="GO" id="GO:0033198">
    <property type="term" value="P:response to ATP"/>
    <property type="evidence" value="ECO:0000314"/>
    <property type="project" value="BHF-UCL"/>
</dbReference>
<dbReference type="GO" id="GO:0051592">
    <property type="term" value="P:response to calcium ion"/>
    <property type="evidence" value="ECO:0007669"/>
    <property type="project" value="Ensembl"/>
</dbReference>
<dbReference type="GO" id="GO:0051602">
    <property type="term" value="P:response to electrical stimulus"/>
    <property type="evidence" value="ECO:0007669"/>
    <property type="project" value="Ensembl"/>
</dbReference>
<dbReference type="GO" id="GO:0034405">
    <property type="term" value="P:response to fluid shear stress"/>
    <property type="evidence" value="ECO:0007669"/>
    <property type="project" value="Ensembl"/>
</dbReference>
<dbReference type="GO" id="GO:0002931">
    <property type="term" value="P:response to ischemia"/>
    <property type="evidence" value="ECO:0000303"/>
    <property type="project" value="ARUK-UCL"/>
</dbReference>
<dbReference type="GO" id="GO:0032496">
    <property type="term" value="P:response to lipopolysaccharide"/>
    <property type="evidence" value="ECO:0007669"/>
    <property type="project" value="Ensembl"/>
</dbReference>
<dbReference type="GO" id="GO:0009612">
    <property type="term" value="P:response to mechanical stimulus"/>
    <property type="evidence" value="ECO:0007669"/>
    <property type="project" value="Ensembl"/>
</dbReference>
<dbReference type="GO" id="GO:0009410">
    <property type="term" value="P:response to xenobiotic stimulus"/>
    <property type="evidence" value="ECO:0007669"/>
    <property type="project" value="Ensembl"/>
</dbReference>
<dbReference type="GO" id="GO:0010043">
    <property type="term" value="P:response to zinc ion"/>
    <property type="evidence" value="ECO:0007669"/>
    <property type="project" value="Ensembl"/>
</dbReference>
<dbReference type="GO" id="GO:0019233">
    <property type="term" value="P:sensory perception of pain"/>
    <property type="evidence" value="ECO:0000250"/>
    <property type="project" value="BHF-UCL"/>
</dbReference>
<dbReference type="GO" id="GO:0048705">
    <property type="term" value="P:skeletal system morphogenesis"/>
    <property type="evidence" value="ECO:0007669"/>
    <property type="project" value="Ensembl"/>
</dbReference>
<dbReference type="GO" id="GO:0016079">
    <property type="term" value="P:synaptic vesicle exocytosis"/>
    <property type="evidence" value="ECO:0007669"/>
    <property type="project" value="Ensembl"/>
</dbReference>
<dbReference type="GO" id="GO:0070231">
    <property type="term" value="P:T cell apoptotic process"/>
    <property type="evidence" value="ECO:0007669"/>
    <property type="project" value="Ensembl"/>
</dbReference>
<dbReference type="GO" id="GO:0043029">
    <property type="term" value="P:T cell homeostasis"/>
    <property type="evidence" value="ECO:0007669"/>
    <property type="project" value="Ensembl"/>
</dbReference>
<dbReference type="GO" id="GO:0001913">
    <property type="term" value="P:T cell mediated cytotoxicity"/>
    <property type="evidence" value="ECO:0007669"/>
    <property type="project" value="Ensembl"/>
</dbReference>
<dbReference type="GO" id="GO:0042098">
    <property type="term" value="P:T cell proliferation"/>
    <property type="evidence" value="ECO:0007669"/>
    <property type="project" value="Ensembl"/>
</dbReference>
<dbReference type="GO" id="GO:0006900">
    <property type="term" value="P:vesicle budding from membrane"/>
    <property type="evidence" value="ECO:0007669"/>
    <property type="project" value="Ensembl"/>
</dbReference>
<dbReference type="FunFam" id="2.60.490.10:FF:000002">
    <property type="entry name" value="P2X purinoceptor"/>
    <property type="match status" value="1"/>
</dbReference>
<dbReference type="Gene3D" id="1.10.287.940">
    <property type="entry name" value="atp-gated p2x4 ion channel"/>
    <property type="match status" value="1"/>
</dbReference>
<dbReference type="Gene3D" id="2.60.490.10">
    <property type="entry name" value="atp-gated p2x4 ion channel domain"/>
    <property type="match status" value="1"/>
</dbReference>
<dbReference type="InterPro" id="IPR046815">
    <property type="entry name" value="P2RX7_C"/>
</dbReference>
<dbReference type="InterPro" id="IPR003050">
    <property type="entry name" value="P2X7_purinoceptor"/>
</dbReference>
<dbReference type="InterPro" id="IPR027309">
    <property type="entry name" value="P2X_extracellular_dom_sf"/>
</dbReference>
<dbReference type="InterPro" id="IPR001429">
    <property type="entry name" value="P2X_purnocptor"/>
</dbReference>
<dbReference type="InterPro" id="IPR053792">
    <property type="entry name" value="P2X_RECEPTOR_CS"/>
</dbReference>
<dbReference type="NCBIfam" id="TIGR00863">
    <property type="entry name" value="P2X"/>
    <property type="match status" value="1"/>
</dbReference>
<dbReference type="PANTHER" id="PTHR10125">
    <property type="entry name" value="P2X PURINOCEPTOR"/>
    <property type="match status" value="1"/>
</dbReference>
<dbReference type="PANTHER" id="PTHR10125:SF13">
    <property type="entry name" value="P2X PURINOCEPTOR 7"/>
    <property type="match status" value="1"/>
</dbReference>
<dbReference type="Pfam" id="PF20478">
    <property type="entry name" value="P2RX7_C"/>
    <property type="match status" value="1"/>
</dbReference>
<dbReference type="Pfam" id="PF00864">
    <property type="entry name" value="P2X_receptor"/>
    <property type="match status" value="1"/>
</dbReference>
<dbReference type="PRINTS" id="PR01314">
    <property type="entry name" value="P2X7RECEPTOR"/>
</dbReference>
<dbReference type="PRINTS" id="PR01307">
    <property type="entry name" value="P2XRECEPTOR"/>
</dbReference>
<dbReference type="PROSITE" id="PS01212">
    <property type="entry name" value="P2X_RECEPTOR"/>
    <property type="match status" value="1"/>
</dbReference>
<evidence type="ECO:0000250" key="1">
    <source>
        <dbReference type="UniProtKB" id="Q64663"/>
    </source>
</evidence>
<evidence type="ECO:0000250" key="2">
    <source>
        <dbReference type="UniProtKB" id="Q9Z1M0"/>
    </source>
</evidence>
<evidence type="ECO:0000269" key="3">
    <source>
    </source>
</evidence>
<evidence type="ECO:0000269" key="4">
    <source>
    </source>
</evidence>
<evidence type="ECO:0000269" key="5">
    <source>
    </source>
</evidence>
<evidence type="ECO:0000269" key="6">
    <source>
    </source>
</evidence>
<evidence type="ECO:0000269" key="7">
    <source>
    </source>
</evidence>
<evidence type="ECO:0000269" key="8">
    <source>
    </source>
</evidence>
<evidence type="ECO:0000269" key="9">
    <source>
    </source>
</evidence>
<evidence type="ECO:0000269" key="10">
    <source>
    </source>
</evidence>
<evidence type="ECO:0000269" key="11">
    <source>
    </source>
</evidence>
<evidence type="ECO:0000269" key="12">
    <source>
    </source>
</evidence>
<evidence type="ECO:0000269" key="13">
    <source>
    </source>
</evidence>
<evidence type="ECO:0000269" key="14">
    <source>
    </source>
</evidence>
<evidence type="ECO:0000269" key="15">
    <source>
    </source>
</evidence>
<evidence type="ECO:0000269" key="16">
    <source>
    </source>
</evidence>
<evidence type="ECO:0000269" key="17">
    <source>
    </source>
</evidence>
<evidence type="ECO:0000269" key="18">
    <source>
    </source>
</evidence>
<evidence type="ECO:0000269" key="19">
    <source>
    </source>
</evidence>
<evidence type="ECO:0000269" key="20">
    <source>
    </source>
</evidence>
<evidence type="ECO:0000269" key="21">
    <source>
    </source>
</evidence>
<evidence type="ECO:0000269" key="22">
    <source>
    </source>
</evidence>
<evidence type="ECO:0000269" key="23">
    <source>
    </source>
</evidence>
<evidence type="ECO:0000269" key="24">
    <source>
    </source>
</evidence>
<evidence type="ECO:0000269" key="25">
    <source>
    </source>
</evidence>
<evidence type="ECO:0000269" key="26">
    <source>
    </source>
</evidence>
<evidence type="ECO:0000269" key="27">
    <source>
    </source>
</evidence>
<evidence type="ECO:0000269" key="28">
    <source ref="6"/>
</evidence>
<evidence type="ECO:0000303" key="29">
    <source>
    </source>
</evidence>
<evidence type="ECO:0000303" key="30">
    <source>
    </source>
</evidence>
<evidence type="ECO:0000303" key="31">
    <source>
    </source>
</evidence>
<evidence type="ECO:0000303" key="32">
    <source>
    </source>
</evidence>
<evidence type="ECO:0000303" key="33">
    <source ref="6"/>
</evidence>
<evidence type="ECO:0000305" key="34"/>
<evidence type="ECO:0007744" key="35">
    <source>
    </source>
</evidence>
<feature type="chain" id="PRO_0000161560" description="P2X purinoceptor 7">
    <location>
        <begin position="1"/>
        <end position="595"/>
    </location>
</feature>
<feature type="topological domain" description="Cytoplasmic" evidence="34">
    <location>
        <begin position="1"/>
        <end position="22"/>
    </location>
</feature>
<feature type="transmembrane region" description="Helical; Name=1" evidence="1">
    <location>
        <begin position="23"/>
        <end position="46"/>
    </location>
</feature>
<feature type="topological domain" description="Extracellular" evidence="34">
    <location>
        <begin position="47"/>
        <end position="328"/>
    </location>
</feature>
<feature type="transmembrane region" description="Helical; Name=2" evidence="1">
    <location>
        <begin position="329"/>
        <end position="353"/>
    </location>
</feature>
<feature type="topological domain" description="Cytoplasmic" evidence="34">
    <location>
        <begin position="354"/>
        <end position="595"/>
    </location>
</feature>
<feature type="region of interest" description="C-cys anchor" evidence="1">
    <location>
        <begin position="360"/>
        <end position="377"/>
    </location>
</feature>
<feature type="region of interest" description="Cytoplasmic ballast" evidence="1">
    <location>
        <begin position="395"/>
        <end position="595"/>
    </location>
</feature>
<feature type="binding site" evidence="1">
    <location>
        <position position="189"/>
    </location>
    <ligand>
        <name>ATP</name>
        <dbReference type="ChEBI" id="CHEBI:30616"/>
    </ligand>
</feature>
<feature type="binding site" evidence="1">
    <location>
        <position position="294"/>
    </location>
    <ligand>
        <name>ATP</name>
        <dbReference type="ChEBI" id="CHEBI:30616"/>
    </ligand>
</feature>
<feature type="binding site" evidence="1">
    <location>
        <position position="311"/>
    </location>
    <ligand>
        <name>ATP</name>
        <dbReference type="ChEBI" id="CHEBI:30616"/>
    </ligand>
</feature>
<feature type="binding site" evidence="1">
    <location>
        <position position="342"/>
    </location>
    <ligand>
        <name>Na(+)</name>
        <dbReference type="ChEBI" id="CHEBI:29101"/>
        <note>ligand shared between homotrimeric partners</note>
    </ligand>
</feature>
<feature type="binding site" evidence="1">
    <location>
        <position position="479"/>
    </location>
    <ligand>
        <name>Zn(2+)</name>
        <dbReference type="ChEBI" id="CHEBI:29105"/>
    </ligand>
</feature>
<feature type="binding site" evidence="1">
    <location>
        <position position="499"/>
    </location>
    <ligand>
        <name>Zn(2+)</name>
        <dbReference type="ChEBI" id="CHEBI:29105"/>
    </ligand>
</feature>
<feature type="binding site" evidence="1">
    <location>
        <position position="506"/>
    </location>
    <ligand>
        <name>Zn(2+)</name>
        <dbReference type="ChEBI" id="CHEBI:29105"/>
    </ligand>
</feature>
<feature type="binding site" evidence="1">
    <location>
        <position position="546"/>
    </location>
    <ligand>
        <name>GTP</name>
        <dbReference type="ChEBI" id="CHEBI:37565"/>
    </ligand>
</feature>
<feature type="binding site" evidence="1">
    <location>
        <position position="547"/>
    </location>
    <ligand>
        <name>GTP</name>
        <dbReference type="ChEBI" id="CHEBI:37565"/>
    </ligand>
</feature>
<feature type="binding site" evidence="1">
    <location>
        <position position="550"/>
    </location>
    <ligand>
        <name>GTP</name>
        <dbReference type="ChEBI" id="CHEBI:37565"/>
    </ligand>
</feature>
<feature type="binding site" evidence="1">
    <location>
        <position position="567"/>
    </location>
    <ligand>
        <name>GTP</name>
        <dbReference type="ChEBI" id="CHEBI:37565"/>
    </ligand>
</feature>
<feature type="binding site" evidence="1">
    <location>
        <position position="572"/>
    </location>
    <ligand>
        <name>Zn(2+)</name>
        <dbReference type="ChEBI" id="CHEBI:29105"/>
    </ligand>
</feature>
<feature type="binding site" evidence="1">
    <location>
        <position position="583"/>
    </location>
    <ligand>
        <name>GTP</name>
        <dbReference type="ChEBI" id="CHEBI:37565"/>
    </ligand>
</feature>
<feature type="binding site" evidence="1">
    <location>
        <position position="589"/>
    </location>
    <ligand>
        <name>GTP</name>
        <dbReference type="ChEBI" id="CHEBI:37565"/>
    </ligand>
</feature>
<feature type="binding site" evidence="1">
    <location>
        <position position="590"/>
    </location>
    <ligand>
        <name>GTP</name>
        <dbReference type="ChEBI" id="CHEBI:37565"/>
    </ligand>
</feature>
<feature type="site" description="Selectivity filter 2" evidence="25">
    <location>
        <position position="14"/>
    </location>
</feature>
<feature type="site" description="Selectivity filter 1" evidence="22 25">
    <location>
        <position position="342"/>
    </location>
</feature>
<feature type="site" description="Selectivity filter 2" evidence="25">
    <location>
        <position position="352"/>
    </location>
</feature>
<feature type="site" description="Selectivity filter 2" evidence="25">
    <location>
        <position position="356"/>
    </location>
</feature>
<feature type="modified residue" description="ADP-ribosylarginine" evidence="2">
    <location>
        <position position="125"/>
    </location>
</feature>
<feature type="modified residue" description="ADP-ribosylarginine" evidence="2">
    <location>
        <position position="133"/>
    </location>
</feature>
<feature type="modified residue" description="Phosphotyrosine" evidence="4">
    <location>
        <position position="343"/>
    </location>
</feature>
<feature type="modified residue" description="Phosphoserine" evidence="35">
    <location>
        <position position="390"/>
    </location>
</feature>
<feature type="lipid moiety-binding region" description="S-palmitoyl cysteine" evidence="1">
    <location>
        <position position="4"/>
    </location>
</feature>
<feature type="lipid moiety-binding region" description="S-palmitoyl cysteine" evidence="1">
    <location>
        <position position="362"/>
    </location>
</feature>
<feature type="lipid moiety-binding region" description="S-palmitoyl cysteine" evidence="1">
    <location>
        <position position="363"/>
    </location>
</feature>
<feature type="lipid moiety-binding region" description="S-palmitoyl cysteine" evidence="1">
    <location>
        <position position="374"/>
    </location>
</feature>
<feature type="lipid moiety-binding region" description="S-palmitoyl cysteine" evidence="1">
    <location>
        <position position="377"/>
    </location>
</feature>
<feature type="glycosylation site" description="N-linked (GlcNAc...) asparagine" evidence="16">
    <location>
        <position position="187"/>
    </location>
</feature>
<feature type="glycosylation site" description="N-linked (GlcNAc...) asparagine" evidence="16">
    <location>
        <position position="202"/>
    </location>
</feature>
<feature type="glycosylation site" description="N-linked (GlcNAc...) asparagine" evidence="16">
    <location>
        <position position="213"/>
    </location>
</feature>
<feature type="glycosylation site" description="N-linked (GlcNAc...) asparagine" evidence="16">
    <location>
        <position position="241"/>
    </location>
</feature>
<feature type="glycosylation site" description="N-linked (GlcNAc...) asparagine" evidence="16">
    <location>
        <position position="284"/>
    </location>
</feature>
<feature type="disulfide bond" evidence="1">
    <location>
        <begin position="119"/>
        <end position="168"/>
    </location>
</feature>
<feature type="disulfide bond" evidence="1">
    <location>
        <begin position="129"/>
        <end position="152"/>
    </location>
</feature>
<feature type="disulfide bond" evidence="1">
    <location>
        <begin position="135"/>
        <end position="162"/>
    </location>
</feature>
<feature type="disulfide bond" evidence="1">
    <location>
        <begin position="216"/>
        <end position="226"/>
    </location>
</feature>
<feature type="disulfide bond" evidence="1">
    <location>
        <begin position="260"/>
        <end position="269"/>
    </location>
</feature>
<feature type="splice variant" id="VSP_047776" description="In isoform G and isoform H." evidence="31">
    <original>MPACCSCSDVFQYETNKVTRIQSMNYGTIKWFFHVIIFSYVCFALVSDKLYQRKEPVISSVHTKVKGIAEVKEEIVENGVKKLVHSVFDTADYTFPLQ</original>
    <variation>MTPGDHSW</variation>
    <location>
        <begin position="1"/>
        <end position="98"/>
    </location>
</feature>
<feature type="splice variant" id="VSP_047777" description="In isoform D." evidence="30 31">
    <original>MPACCSC</original>
    <variation>MDGPAEQ</variation>
    <location>
        <begin position="1"/>
        <end position="7"/>
    </location>
</feature>
<feature type="splice variant" id="VSP_047778" description="In isoform F." evidence="31">
    <original>MPA</original>
    <variation>MWQ</variation>
    <location>
        <begin position="1"/>
        <end position="3"/>
    </location>
</feature>
<feature type="splice variant" id="VSP_047779" description="In isoform F." evidence="31">
    <location>
        <begin position="4"/>
        <end position="292"/>
    </location>
</feature>
<feature type="splice variant" id="VSP_047780" description="In isoform D." evidence="30 31">
    <location>
        <begin position="8"/>
        <end position="177"/>
    </location>
</feature>
<feature type="splice variant" id="VSP_047781" description="In isoform C." evidence="29 31">
    <original>YPTRRTL</original>
    <variation>EFRPEGV</variation>
    <location>
        <begin position="122"/>
        <end position="128"/>
    </location>
</feature>
<feature type="splice variant" id="VSP_047782" description="In isoform C." evidence="29 31">
    <location>
        <begin position="129"/>
        <end position="595"/>
    </location>
</feature>
<feature type="splice variant" id="VSP_047783" description="In isoform E." evidence="31">
    <location>
        <begin position="206"/>
        <end position="294"/>
    </location>
</feature>
<feature type="splice variant" id="VSP_062514" description="In isoform J." evidence="32 33">
    <original>GGIMGIEIYW</original>
    <variation>IRQVLQGKQC</variation>
    <location>
        <begin position="249"/>
        <end position="258"/>
    </location>
</feature>
<feature type="splice variant" id="VSP_062515" description="In isoform J." evidence="32 33">
    <location>
        <begin position="259"/>
        <end position="595"/>
    </location>
</feature>
<feature type="splice variant" id="VSP_047784" description="In isoform B, isoform E and isoform G." evidence="31">
    <original>AAVFIDFLIDTYSSNCCR</original>
    <variation>VRDSLFHALGKWFGEGSD</variation>
    <location>
        <begin position="347"/>
        <end position="364"/>
    </location>
</feature>
<feature type="splice variant" id="VSP_047785" description="In isoform B, isoform E and isoform G." evidence="31">
    <location>
        <begin position="365"/>
        <end position="595"/>
    </location>
</feature>
<feature type="sequence variant" id="VAR_036444" description="In a colorectal cancer sample; somatic mutation." evidence="13">
    <original>N</original>
    <variation>S</variation>
    <location>
        <position position="25"/>
    </location>
</feature>
<feature type="sequence variant" id="VAR_057665" description="In dbSNP:rs17525809." evidence="19 23">
    <original>V</original>
    <variation>A</variation>
    <location>
        <position position="76"/>
    </location>
</feature>
<feature type="sequence variant" id="VAR_079880" description="In dbSNP:rs28360445." evidence="23">
    <original>R</original>
    <variation>W</variation>
    <location>
        <position position="117"/>
    </location>
</feature>
<feature type="sequence variant" id="VAR_079881" description="In dbSNP:rs201668926." evidence="23">
    <original>R</original>
    <variation>L</variation>
    <location>
        <position position="125"/>
    </location>
</feature>
<feature type="sequence variant" id="VAR_079882" description="In dbSNP:rs150235326." evidence="23">
    <original>Q</original>
    <variation>R</variation>
    <location>
        <position position="148"/>
    </location>
</feature>
<feature type="sequence variant" id="VAR_057666" description="Decreases cell surface expression; decreases phagocytosis activity; dbSNP:rs28360447." evidence="19 23">
    <original>G</original>
    <variation>R</variation>
    <location>
        <position position="150"/>
    </location>
</feature>
<feature type="sequence variant" id="VAR_019649" description="In dbSNP:rs208294." evidence="9 10 12 19 23 26 27 28">
    <original>Y</original>
    <variation>H</variation>
    <location>
        <position position="155"/>
    </location>
</feature>
<feature type="sequence variant" id="VAR_079883" description="May influence susceptibility to multiple sclerosis in the presence of variant S-135 in P2RX4; decreases cell surface expression; decreases pore complex assembly; decreases phagocytosis activity; dbSNP:rs140915863." evidence="23">
    <original>T</original>
    <variation>M</variation>
    <location>
        <position position="205"/>
    </location>
</feature>
<feature type="sequence variant" id="VAR_079884" description="In dbSNP:rs149639375." evidence="23">
    <original>R</original>
    <variation>H</variation>
    <location>
        <position position="264"/>
    </location>
</feature>
<feature type="sequence variant" id="VAR_057667" description="In dbSNP:rs16950860.">
    <original>R</original>
    <variation>C</variation>
    <location>
        <position position="270"/>
    </location>
</feature>
<feature type="sequence variant" id="VAR_019648" description="In dbSNP:rs7958311." evidence="9 10 19 23 26">
    <original>R</original>
    <variation>H</variation>
    <location>
        <position position="270"/>
    </location>
</feature>
<feature type="sequence variant" id="VAR_057668" description="In dbSNP:rs7958316." evidence="19 23">
    <original>R</original>
    <variation>H</variation>
    <location>
        <position position="276"/>
    </location>
</feature>
<feature type="sequence variant" id="VAR_079885" description="In dbSNP:rs146725537." evidence="23">
    <original>Y</original>
    <variation>H</variation>
    <location>
        <position position="288"/>
    </location>
</feature>
<feature type="sequence variant" id="VAR_057669" description="Results in a loss of function; dbSNP:rs28360457." evidence="8 19 23">
    <original>R</original>
    <variation>Q</variation>
    <location>
        <position position="307"/>
    </location>
</feature>
<feature type="sequence variant" id="VAR_057670" description="In dbSNP:rs1718119." evidence="19 23 27">
    <original>A</original>
    <variation>T</variation>
    <location>
        <position position="348"/>
    </location>
</feature>
<feature type="sequence variant" id="VAR_019650" description="In dbSNP:rs2230911." evidence="7 19 23">
    <original>T</original>
    <variation>S</variation>
    <location>
        <position position="357"/>
    </location>
</feature>
<feature type="sequence variant" id="VAR_079886" description="May influence susceptibility to multiple sclerosis in the presence of variant S-135 in P2RX4; no effect on cell surface expression; no effect on pore complex assembly; dbSNP:rs201921967." evidence="23">
    <original>N</original>
    <variation>S</variation>
    <location>
        <position position="361"/>
    </location>
</feature>
<feature type="sequence variant" id="VAR_057671" description="In dbSNP:rs10160951.">
    <original>P</original>
    <variation>R</variation>
    <location>
        <position position="430"/>
    </location>
</feature>
<feature type="sequence variant" id="VAR_057672" description="In dbSNP:rs28360459." evidence="23">
    <original>A</original>
    <variation>V</variation>
    <location>
        <position position="433"/>
    </location>
</feature>
<feature type="sequence variant" id="VAR_019651" description="In dbSNP:rs2230912." evidence="19 23">
    <original>Q</original>
    <variation>R</variation>
    <location>
        <position position="460"/>
    </location>
</feature>
<feature type="sequence variant" id="VAR_019652" description="Results in a loss of function; dbSNP:rs3751143." evidence="3 9 19 23">
    <original>E</original>
    <variation>A</variation>
    <location>
        <position position="496"/>
    </location>
</feature>
<feature type="sequence variant" id="VAR_057673" description="In dbSNP:rs2230913." evidence="23">
    <original>H</original>
    <variation>Q</variation>
    <location>
        <position position="521"/>
    </location>
</feature>
<feature type="sequence variant" id="VAR_057674" description="In dbSNP:rs34219304." evidence="23">
    <original>V</original>
    <variation>I</variation>
    <location>
        <position position="522"/>
    </location>
</feature>
<feature type="sequence variant" id="VAR_079887" description="In dbSNP:rs201256156." evidence="23">
    <original>A</original>
    <variation>V</variation>
    <location>
        <position position="535"/>
    </location>
</feature>
<feature type="sequence variant" id="VAR_079888" description="In dbSNP:rs34567077." evidence="23">
    <original>R</original>
    <variation>Q</variation>
    <location>
        <position position="544"/>
    </location>
</feature>
<feature type="sequence variant" id="VAR_068011" description="Results in trafficking defect and around 50% loss of function; dbSNP:rs1653624." evidence="6 11 19 23">
    <original>I</original>
    <variation>N</variation>
    <location>
        <position position="568"/>
    </location>
</feature>
<feature type="sequence variant" id="VAR_036445" description="In a colorectal cancer sample; somatic mutation." evidence="13">
    <original>R</original>
    <variation>L</variation>
    <location>
        <position position="574"/>
    </location>
</feature>
<feature type="sequence variant" id="VAR_057675" description="In dbSNP:rs28360460.">
    <original>R</original>
    <variation>Q</variation>
    <location>
        <position position="578"/>
    </location>
</feature>
<feature type="mutagenesis site" description="Loss of cation selectivity in favor of anion (Cl(-)) selectivity; when associated with K-342 and K-352." evidence="25">
    <original>E</original>
    <variation>K</variation>
    <location>
        <position position="14"/>
    </location>
</feature>
<feature type="mutagenesis site" description="Alters cell surface expression." evidence="16">
    <original>N</original>
    <variation>A</variation>
    <location>
        <position position="187"/>
    </location>
</feature>
<feature type="mutagenesis site" description="Decreases the selectivity for Na(+) over the larger organic cation Tris(+). Loss of cation selectivity in favor of anion (Cl(-)) selectivity; when associated with K-14 and K-352." evidence="24 25">
    <original>S</original>
    <variation>K</variation>
    <location>
        <position position="342"/>
    </location>
</feature>
<feature type="mutagenesis site" description="Loss of cation selectivity in favor of anion (Cl(-)) selectivity; when associated with K-14 and K-352." evidence="25">
    <original>D</original>
    <variation>K</variation>
    <location>
        <position position="352"/>
    </location>
</feature>
<feature type="sequence conflict" description="In Ref. 3; CAA73360." evidence="34" ref="3">
    <original>S</original>
    <variation>R</variation>
    <location>
        <position position="481"/>
    </location>
</feature>
<protein>
    <recommendedName>
        <fullName>P2X purinoceptor 7</fullName>
        <shortName>P2X7</shortName>
    </recommendedName>
    <alternativeName>
        <fullName>ATP receptor</fullName>
    </alternativeName>
    <alternativeName>
        <fullName>P2Z receptor</fullName>
    </alternativeName>
    <alternativeName>
        <fullName>Purinergic receptor</fullName>
    </alternativeName>
</protein>
<keyword id="KW-0013">ADP-ribosylation</keyword>
<keyword id="KW-0025">Alternative splicing</keyword>
<keyword id="KW-0067">ATP-binding</keyword>
<keyword id="KW-1003">Cell membrane</keyword>
<keyword id="KW-1015">Disulfide bond</keyword>
<keyword id="KW-0325">Glycoprotein</keyword>
<keyword id="KW-0342">GTP-binding</keyword>
<keyword id="KW-0407">Ion channel</keyword>
<keyword id="KW-0406">Ion transport</keyword>
<keyword id="KW-1071">Ligand-gated ion channel</keyword>
<keyword id="KW-0449">Lipoprotein</keyword>
<keyword id="KW-0472">Membrane</keyword>
<keyword id="KW-0479">Metal-binding</keyword>
<keyword id="KW-0547">Nucleotide-binding</keyword>
<keyword id="KW-0564">Palmitate</keyword>
<keyword id="KW-0597">Phosphoprotein</keyword>
<keyword id="KW-1267">Proteomics identification</keyword>
<keyword id="KW-0675">Receptor</keyword>
<keyword id="KW-1185">Reference proteome</keyword>
<keyword id="KW-0915">Sodium</keyword>
<keyword id="KW-0812">Transmembrane</keyword>
<keyword id="KW-1133">Transmembrane helix</keyword>
<keyword id="KW-0813">Transport</keyword>
<keyword id="KW-0862">Zinc</keyword>
<proteinExistence type="evidence at protein level"/>
<sequence>MPACCSCSDVFQYETNKVTRIQSMNYGTIKWFFHVIIFSYVCFALVSDKLYQRKEPVISSVHTKVKGIAEVKEEIVENGVKKLVHSVFDTADYTFPLQGNSFFVMTNFLKTEGQEQRLCPEYPTRRTLCSSDRGCKKGWMDPQSKGIQTGRCVVYEGNQKTCEVSAWCPIEAVEEAPRPALLNSAENFTVLIKNNIDFPGHNYTTRNILPGLNITCTFHKTQNPQCPIFRLGDIFRETGDNFSDVAIQGGIMGIEIYWDCNLDRWFHHCRPKYSFRRLDDKTTNVSLYPGYNFRYAKYYKENNVEKRTLIKVFGIRFDILVFGTGGKFDIIQLVVYIGSTLSYFGLAAVFIDFLIDTYSSNCCRSHIYPWCKCCQPCVVNEYYYRKKCESIVEPKPTLKYVSFVDESHIRMVNQQLLGRSLQDVKGQEVPRPAMDFTDLSRLPLALHDTPPIPGQPEEIQLLRKEATPRSRDSPVWCQCGSCLPSQLPESHRCLEELCCRKKPGACITTSELFRKLVLSRHVLQFLLLYQEPLLALDVDSTNSRLRHCAYRCYATWRFGSQDMADFAILPSCCRWRIRKEFPKSEGQYSGFKSPY</sequence>
<accession>Q99572</accession>
<accession>A8K2Z0</accession>
<accession>E7EMK6</accession>
<accession>F5H6P2</accession>
<accession>F5H7E8</accession>
<accession>F8W951</accession>
<accession>O14991</accession>
<accession>Q15G98</accession>
<accession>Q4VKH8</accession>
<accession>Q4VKH9</accession>
<accession>Q4VKI0</accession>
<accession>Q4VKI1</accession>
<accession>Q4VKI2</accession>
<accession>Q4VKI3</accession>
<accession>Q4VKI4</accession>
<accession>Q7Z771</accession>
<accession>Q96EV7</accession>
<gene>
    <name type="primary">P2RX7</name>
</gene>
<reference key="1">
    <citation type="journal article" date="1997" name="J. Biol. Chem.">
        <title>The permeabilizing ATP receptor, P2X7. Cloning and expression of a human cDNA.</title>
        <authorList>
            <person name="Rassendren F."/>
            <person name="Buell G.N."/>
            <person name="Virginio C."/>
            <person name="Collo G."/>
            <person name="North R.A."/>
            <person name="Surprenant A."/>
        </authorList>
    </citation>
    <scope>NUCLEOTIDE SEQUENCE [MRNA] (ISOFORM A)</scope>
    <scope>FUNCTION</scope>
    <scope>VARIANTS HIS-155 AND HIS-270</scope>
    <source>
        <tissue>Brain</tissue>
    </source>
</reference>
<reference key="2">
    <citation type="journal article" date="2006" name="J. Biol. Chem.">
        <title>A truncated P2X7 receptor variant (P2X7-j) endogenously expressed in cervical cancer cells antagonizes the full-length P2X7 receptor through hetero-oligomerization.</title>
        <authorList>
            <person name="Feng Y.H."/>
            <person name="Li X."/>
            <person name="Wang L."/>
            <person name="Zhou L."/>
            <person name="Gorodeski G.I."/>
        </authorList>
    </citation>
    <scope>NUCLEOTIDE SEQUENCE [MRNA] (ISOFORM J)</scope>
    <scope>VARIANT HIS-155</scope>
</reference>
<reference key="3">
    <citation type="journal article" date="1998" name="Recept. Channels">
        <title>Gene structure and chromosomal localization of the human P2X7 receptor.</title>
        <authorList>
            <person name="Buell G.N."/>
            <person name="Talabot F."/>
            <person name="Gos A."/>
            <person name="Lorenz J."/>
            <person name="Lai E."/>
            <person name="Morris M.A."/>
            <person name="Antonarakis S.E."/>
        </authorList>
    </citation>
    <scope>NUCLEOTIDE SEQUENCE [GENOMIC DNA]</scope>
    <scope>VARIANTS HIS-155 AND THR-348</scope>
</reference>
<reference key="4">
    <citation type="journal article" date="2005" name="Biochem. Biophys. Res. Commun.">
        <title>Identification and characterization of splice variants of the human P2X7 ATP channel.</title>
        <authorList>
            <person name="Cheewatrakoolpong B."/>
            <person name="Gilchrest H."/>
            <person name="Anthes J.C."/>
            <person name="Greenfeder S."/>
        </authorList>
    </citation>
    <scope>NUCLEOTIDE SEQUENCE [MRNA] (ISOFORMS B; C; D; E; F; G AND H)</scope>
    <scope>ALTERNATIVE SPLICING</scope>
    <scope>TISSUE SPECIFICITY</scope>
    <scope>VARIANTS HIS-155 AND HIS-270</scope>
    <source>
        <tissue>Brain</tissue>
    </source>
</reference>
<reference key="5">
    <citation type="journal article" date="2004" name="Nat. Genet.">
        <title>Complete sequencing and characterization of 21,243 full-length human cDNAs.</title>
        <authorList>
            <person name="Ota T."/>
            <person name="Suzuki Y."/>
            <person name="Nishikawa T."/>
            <person name="Otsuki T."/>
            <person name="Sugiyama T."/>
            <person name="Irie R."/>
            <person name="Wakamatsu A."/>
            <person name="Hayashi K."/>
            <person name="Sato H."/>
            <person name="Nagai K."/>
            <person name="Kimura K."/>
            <person name="Makita H."/>
            <person name="Sekine M."/>
            <person name="Obayashi M."/>
            <person name="Nishi T."/>
            <person name="Shibahara T."/>
            <person name="Tanaka T."/>
            <person name="Ishii S."/>
            <person name="Yamamoto J."/>
            <person name="Saito K."/>
            <person name="Kawai Y."/>
            <person name="Isono Y."/>
            <person name="Nakamura Y."/>
            <person name="Nagahari K."/>
            <person name="Murakami K."/>
            <person name="Yasuda T."/>
            <person name="Iwayanagi T."/>
            <person name="Wagatsuma M."/>
            <person name="Shiratori A."/>
            <person name="Sudo H."/>
            <person name="Hosoiri T."/>
            <person name="Kaku Y."/>
            <person name="Kodaira H."/>
            <person name="Kondo H."/>
            <person name="Sugawara M."/>
            <person name="Takahashi M."/>
            <person name="Kanda K."/>
            <person name="Yokoi T."/>
            <person name="Furuya T."/>
            <person name="Kikkawa E."/>
            <person name="Omura Y."/>
            <person name="Abe K."/>
            <person name="Kamihara K."/>
            <person name="Katsuta N."/>
            <person name="Sato K."/>
            <person name="Tanikawa M."/>
            <person name="Yamazaki M."/>
            <person name="Ninomiya K."/>
            <person name="Ishibashi T."/>
            <person name="Yamashita H."/>
            <person name="Murakawa K."/>
            <person name="Fujimori K."/>
            <person name="Tanai H."/>
            <person name="Kimata M."/>
            <person name="Watanabe M."/>
            <person name="Hiraoka S."/>
            <person name="Chiba Y."/>
            <person name="Ishida S."/>
            <person name="Ono Y."/>
            <person name="Takiguchi S."/>
            <person name="Watanabe S."/>
            <person name="Yosida M."/>
            <person name="Hotuta T."/>
            <person name="Kusano J."/>
            <person name="Kanehori K."/>
            <person name="Takahashi-Fujii A."/>
            <person name="Hara H."/>
            <person name="Tanase T.-O."/>
            <person name="Nomura Y."/>
            <person name="Togiya S."/>
            <person name="Komai F."/>
            <person name="Hara R."/>
            <person name="Takeuchi K."/>
            <person name="Arita M."/>
            <person name="Imose N."/>
            <person name="Musashino K."/>
            <person name="Yuuki H."/>
            <person name="Oshima A."/>
            <person name="Sasaki N."/>
            <person name="Aotsuka S."/>
            <person name="Yoshikawa Y."/>
            <person name="Matsunawa H."/>
            <person name="Ichihara T."/>
            <person name="Shiohata N."/>
            <person name="Sano S."/>
            <person name="Moriya S."/>
            <person name="Momiyama H."/>
            <person name="Satoh N."/>
            <person name="Takami S."/>
            <person name="Terashima Y."/>
            <person name="Suzuki O."/>
            <person name="Nakagawa S."/>
            <person name="Senoh A."/>
            <person name="Mizoguchi H."/>
            <person name="Goto Y."/>
            <person name="Shimizu F."/>
            <person name="Wakebe H."/>
            <person name="Hishigaki H."/>
            <person name="Watanabe T."/>
            <person name="Sugiyama A."/>
            <person name="Takemoto M."/>
            <person name="Kawakami B."/>
            <person name="Yamazaki M."/>
            <person name="Watanabe K."/>
            <person name="Kumagai A."/>
            <person name="Itakura S."/>
            <person name="Fukuzumi Y."/>
            <person name="Fujimori Y."/>
            <person name="Komiyama M."/>
            <person name="Tashiro H."/>
            <person name="Tanigami A."/>
            <person name="Fujiwara T."/>
            <person name="Ono T."/>
            <person name="Yamada K."/>
            <person name="Fujii Y."/>
            <person name="Ozaki K."/>
            <person name="Hirao M."/>
            <person name="Ohmori Y."/>
            <person name="Kawabata A."/>
            <person name="Hikiji T."/>
            <person name="Kobatake N."/>
            <person name="Inagaki H."/>
            <person name="Ikema Y."/>
            <person name="Okamoto S."/>
            <person name="Okitani R."/>
            <person name="Kawakami T."/>
            <person name="Noguchi S."/>
            <person name="Itoh T."/>
            <person name="Shigeta K."/>
            <person name="Senba T."/>
            <person name="Matsumura K."/>
            <person name="Nakajima Y."/>
            <person name="Mizuno T."/>
            <person name="Morinaga M."/>
            <person name="Sasaki M."/>
            <person name="Togashi T."/>
            <person name="Oyama M."/>
            <person name="Hata H."/>
            <person name="Watanabe M."/>
            <person name="Komatsu T."/>
            <person name="Mizushima-Sugano J."/>
            <person name="Satoh T."/>
            <person name="Shirai Y."/>
            <person name="Takahashi Y."/>
            <person name="Nakagawa K."/>
            <person name="Okumura K."/>
            <person name="Nagase T."/>
            <person name="Nomura N."/>
            <person name="Kikuchi H."/>
            <person name="Masuho Y."/>
            <person name="Yamashita R."/>
            <person name="Nakai K."/>
            <person name="Yada T."/>
            <person name="Nakamura Y."/>
            <person name="Ohara O."/>
            <person name="Isogai T."/>
            <person name="Sugano S."/>
        </authorList>
    </citation>
    <scope>NUCLEOTIDE SEQUENCE [LARGE SCALE MRNA] (ISOFORMS A AND C)</scope>
    <scope>VARIANT SER-357</scope>
    <source>
        <tissue>Brain</tissue>
        <tissue>Umbilical cord blood</tissue>
    </source>
</reference>
<reference key="6">
    <citation type="submission" date="2019-01" db="EMBL/GenBank/DDBJ databases">
        <title>A P2RX7 single nucleotide polymorphism haplotype promotes skipping of exons 7 and 8 increasing levels of P2XL, a novel protein isoform that forms a trimeric complex with full-length P2X7.</title>
        <authorList>
            <person name="Skarratt K.K."/>
            <person name="Fuller S.J."/>
        </authorList>
    </citation>
    <scope>NUCLEOTIDE SEQUENCE [MRNA] (ISOFORM J)</scope>
    <scope>VARIANT HIS-155</scope>
</reference>
<reference key="7">
    <citation type="journal article" date="2006" name="Nature">
        <title>The finished DNA sequence of human chromosome 12.</title>
        <authorList>
            <person name="Scherer S.E."/>
            <person name="Muzny D.M."/>
            <person name="Buhay C.J."/>
            <person name="Chen R."/>
            <person name="Cree A."/>
            <person name="Ding Y."/>
            <person name="Dugan-Rocha S."/>
            <person name="Gill R."/>
            <person name="Gunaratne P."/>
            <person name="Harris R.A."/>
            <person name="Hawes A.C."/>
            <person name="Hernandez J."/>
            <person name="Hodgson A.V."/>
            <person name="Hume J."/>
            <person name="Jackson A."/>
            <person name="Khan Z.M."/>
            <person name="Kovar-Smith C."/>
            <person name="Lewis L.R."/>
            <person name="Lozado R.J."/>
            <person name="Metzker M.L."/>
            <person name="Milosavljevic A."/>
            <person name="Miner G.R."/>
            <person name="Montgomery K.T."/>
            <person name="Morgan M.B."/>
            <person name="Nazareth L.V."/>
            <person name="Scott G."/>
            <person name="Sodergren E."/>
            <person name="Song X.-Z."/>
            <person name="Steffen D."/>
            <person name="Lovering R.C."/>
            <person name="Wheeler D.A."/>
            <person name="Worley K.C."/>
            <person name="Yuan Y."/>
            <person name="Zhang Z."/>
            <person name="Adams C.Q."/>
            <person name="Ansari-Lari M.A."/>
            <person name="Ayele M."/>
            <person name="Brown M.J."/>
            <person name="Chen G."/>
            <person name="Chen Z."/>
            <person name="Clerc-Blankenburg K.P."/>
            <person name="Davis C."/>
            <person name="Delgado O."/>
            <person name="Dinh H.H."/>
            <person name="Draper H."/>
            <person name="Gonzalez-Garay M.L."/>
            <person name="Havlak P."/>
            <person name="Jackson L.R."/>
            <person name="Jacob L.S."/>
            <person name="Kelly S.H."/>
            <person name="Li L."/>
            <person name="Li Z."/>
            <person name="Liu J."/>
            <person name="Liu W."/>
            <person name="Lu J."/>
            <person name="Maheshwari M."/>
            <person name="Nguyen B.-V."/>
            <person name="Okwuonu G.O."/>
            <person name="Pasternak S."/>
            <person name="Perez L.M."/>
            <person name="Plopper F.J.H."/>
            <person name="Santibanez J."/>
            <person name="Shen H."/>
            <person name="Tabor P.E."/>
            <person name="Verduzco D."/>
            <person name="Waldron L."/>
            <person name="Wang Q."/>
            <person name="Williams G.A."/>
            <person name="Zhang J."/>
            <person name="Zhou J."/>
            <person name="Allen C.C."/>
            <person name="Amin A.G."/>
            <person name="Anyalebechi V."/>
            <person name="Bailey M."/>
            <person name="Barbaria J.A."/>
            <person name="Bimage K.E."/>
            <person name="Bryant N.P."/>
            <person name="Burch P.E."/>
            <person name="Burkett C.E."/>
            <person name="Burrell K.L."/>
            <person name="Calderon E."/>
            <person name="Cardenas V."/>
            <person name="Carter K."/>
            <person name="Casias K."/>
            <person name="Cavazos I."/>
            <person name="Cavazos S.R."/>
            <person name="Ceasar H."/>
            <person name="Chacko J."/>
            <person name="Chan S.N."/>
            <person name="Chavez D."/>
            <person name="Christopoulos C."/>
            <person name="Chu J."/>
            <person name="Cockrell R."/>
            <person name="Cox C.D."/>
            <person name="Dang M."/>
            <person name="Dathorne S.R."/>
            <person name="David R."/>
            <person name="Davis C.M."/>
            <person name="Davy-Carroll L."/>
            <person name="Deshazo D.R."/>
            <person name="Donlin J.E."/>
            <person name="D'Souza L."/>
            <person name="Eaves K.A."/>
            <person name="Egan A."/>
            <person name="Emery-Cohen A.J."/>
            <person name="Escotto M."/>
            <person name="Flagg N."/>
            <person name="Forbes L.D."/>
            <person name="Gabisi A.M."/>
            <person name="Garza M."/>
            <person name="Hamilton C."/>
            <person name="Henderson N."/>
            <person name="Hernandez O."/>
            <person name="Hines S."/>
            <person name="Hogues M.E."/>
            <person name="Huang M."/>
            <person name="Idlebird D.G."/>
            <person name="Johnson R."/>
            <person name="Jolivet A."/>
            <person name="Jones S."/>
            <person name="Kagan R."/>
            <person name="King L.M."/>
            <person name="Leal B."/>
            <person name="Lebow H."/>
            <person name="Lee S."/>
            <person name="LeVan J.M."/>
            <person name="Lewis L.C."/>
            <person name="London P."/>
            <person name="Lorensuhewa L.M."/>
            <person name="Loulseged H."/>
            <person name="Lovett D.A."/>
            <person name="Lucier A."/>
            <person name="Lucier R.L."/>
            <person name="Ma J."/>
            <person name="Madu R.C."/>
            <person name="Mapua P."/>
            <person name="Martindale A.D."/>
            <person name="Martinez E."/>
            <person name="Massey E."/>
            <person name="Mawhiney S."/>
            <person name="Meador M.G."/>
            <person name="Mendez S."/>
            <person name="Mercado C."/>
            <person name="Mercado I.C."/>
            <person name="Merritt C.E."/>
            <person name="Miner Z.L."/>
            <person name="Minja E."/>
            <person name="Mitchell T."/>
            <person name="Mohabbat F."/>
            <person name="Mohabbat K."/>
            <person name="Montgomery B."/>
            <person name="Moore N."/>
            <person name="Morris S."/>
            <person name="Munidasa M."/>
            <person name="Ngo R.N."/>
            <person name="Nguyen N.B."/>
            <person name="Nickerson E."/>
            <person name="Nwaokelemeh O.O."/>
            <person name="Nwokenkwo S."/>
            <person name="Obregon M."/>
            <person name="Oguh M."/>
            <person name="Oragunye N."/>
            <person name="Oviedo R.J."/>
            <person name="Parish B.J."/>
            <person name="Parker D.N."/>
            <person name="Parrish J."/>
            <person name="Parks K.L."/>
            <person name="Paul H.A."/>
            <person name="Payton B.A."/>
            <person name="Perez A."/>
            <person name="Perrin W."/>
            <person name="Pickens A."/>
            <person name="Primus E.L."/>
            <person name="Pu L.-L."/>
            <person name="Puazo M."/>
            <person name="Quiles M.M."/>
            <person name="Quiroz J.B."/>
            <person name="Rabata D."/>
            <person name="Reeves K."/>
            <person name="Ruiz S.J."/>
            <person name="Shao H."/>
            <person name="Sisson I."/>
            <person name="Sonaike T."/>
            <person name="Sorelle R.P."/>
            <person name="Sutton A.E."/>
            <person name="Svatek A.F."/>
            <person name="Svetz L.A."/>
            <person name="Tamerisa K.S."/>
            <person name="Taylor T.R."/>
            <person name="Teague B."/>
            <person name="Thomas N."/>
            <person name="Thorn R.D."/>
            <person name="Trejos Z.Y."/>
            <person name="Trevino B.K."/>
            <person name="Ukegbu O.N."/>
            <person name="Urban J.B."/>
            <person name="Vasquez L.I."/>
            <person name="Vera V.A."/>
            <person name="Villasana D.M."/>
            <person name="Wang L."/>
            <person name="Ward-Moore S."/>
            <person name="Warren J.T."/>
            <person name="Wei X."/>
            <person name="White F."/>
            <person name="Williamson A.L."/>
            <person name="Wleczyk R."/>
            <person name="Wooden H.S."/>
            <person name="Wooden S.H."/>
            <person name="Yen J."/>
            <person name="Yoon L."/>
            <person name="Yoon V."/>
            <person name="Zorrilla S.E."/>
            <person name="Nelson D."/>
            <person name="Kucherlapati R."/>
            <person name="Weinstock G."/>
            <person name="Gibbs R.A."/>
        </authorList>
    </citation>
    <scope>NUCLEOTIDE SEQUENCE [LARGE SCALE GENOMIC DNA]</scope>
    <scope>VARIANT ASN-568</scope>
</reference>
<reference key="8">
    <citation type="journal article" date="2004" name="Genome Res.">
        <title>The status, quality, and expansion of the NIH full-length cDNA project: the Mammalian Gene Collection (MGC).</title>
        <authorList>
            <consortium name="The MGC Project Team"/>
        </authorList>
    </citation>
    <scope>NUCLEOTIDE SEQUENCE [LARGE SCALE MRNA] (ISOFORMS A AND D)</scope>
    <scope>VARIANTS HIS-155; HIS-270 AND ALA-496</scope>
    <source>
        <tissue>Brain</tissue>
        <tissue>Skin</tissue>
    </source>
</reference>
<reference key="9">
    <citation type="journal article" date="2001" name="EMBO J.">
        <title>Proteomic and functional evidence for a P2X7 receptor signalling complex.</title>
        <authorList>
            <person name="Kim M."/>
            <person name="Jiang L.H."/>
            <person name="Wilson H.L."/>
            <person name="North R.A."/>
            <person name="Surprenant A."/>
        </authorList>
    </citation>
    <scope>PHOSPHORYLATION AT TYR-343</scope>
    <scope>INTERACTION WITH LAMA3; ITGB2; ACTB; ACTN4; SVIL; MPP3; HSPA1; HSPCB; HSPA8; PIK230 AND PTPRB</scope>
</reference>
<reference key="10">
    <citation type="journal article" date="2002" name="J. Biol. Chem.">
        <title>Epithelial membrane proteins induce membrane blebbing and interact with the P2X7 receptor C terminus.</title>
        <authorList>
            <person name="Wilson H.L."/>
            <person name="Wilson S.A."/>
            <person name="Surprenant A."/>
            <person name="North R.A."/>
        </authorList>
    </citation>
    <scope>INTERACTION WITH EMP2</scope>
    <scope>SUBCELLULAR LOCATION</scope>
</reference>
<reference key="11">
    <citation type="journal article" date="2007" name="Biophys. J.">
        <title>Influence of extracellular monovalent cations on pore and gating properties of P2X7 receptor-operated single-channel currents.</title>
        <authorList>
            <person name="Riedel T."/>
            <person name="Schmalzing G."/>
            <person name="Markwardt F."/>
        </authorList>
    </citation>
    <scope>FUNCTION</scope>
    <scope>TRANSPORTER ACTIVITY</scope>
    <scope>ACTIVITY REGULATION</scope>
</reference>
<reference key="12">
    <citation type="journal article" date="2009" name="FASEB J.">
        <title>Palmitoylation of the P2X7 receptor, an ATP-gated channel, controls its expression and association with lipid rafts.</title>
        <authorList>
            <person name="Gonnord P."/>
            <person name="Delarasse C."/>
            <person name="Auger R."/>
            <person name="Benihoud K."/>
            <person name="Prigent M."/>
            <person name="Cuif M.H."/>
            <person name="Lamaze C."/>
            <person name="Kanellopoulos J.M."/>
        </authorList>
    </citation>
    <scope>PALMITOYLATION</scope>
</reference>
<reference key="13">
    <citation type="journal article" date="2010" name="Biochemistry">
        <title>Mutation of putative N-linked glycosylation sites on the human nucleotide receptor P2X7 reveals a key residue important for receptor function.</title>
        <authorList>
            <person name="Lenertz L.Y."/>
            <person name="Wang Z."/>
            <person name="Guadarrama A."/>
            <person name="Hill L.M."/>
            <person name="Gavala M.L."/>
            <person name="Bertics P.J."/>
        </authorList>
    </citation>
    <scope>GLYCOSYLATION AT ASN-187; ASN-202; ASN-213; ASN-241 AND ASN-284</scope>
    <scope>MUTAGENESIS OF ASN-187</scope>
</reference>
<reference key="14">
    <citation type="journal article" date="2010" name="FASEB J.">
        <title>Trophic activity of a naturally occurring truncated isoform of the P2X7 receptor.</title>
        <authorList>
            <person name="Adinolfi E."/>
            <person name="Cirillo M."/>
            <person name="Woltersdorf R."/>
            <person name="Falzoni S."/>
            <person name="Chiozzi P."/>
            <person name="Pellegatti P."/>
            <person name="Callegari M.G."/>
            <person name="Sandona D."/>
            <person name="Markwardt F."/>
            <person name="Schmalzing G."/>
            <person name="Di Virgilio F."/>
        </authorList>
    </citation>
    <scope>FUNCTION (ISOFORM B)</scope>
    <scope>TRANSPORTER ACTIVITY</scope>
    <scope>ACTIVITY REGULATION</scope>
    <scope>SUBUNIT</scope>
</reference>
<reference key="15">
    <citation type="journal article" date="2011" name="J. Immunol.">
        <title>P2X(7) is a scavenger receptor for apoptotic cells in the absence of its ligand, extracellular ATP.</title>
        <authorList>
            <person name="Gu B.J."/>
            <person name="Saunders B.M."/>
            <person name="Petrou S."/>
            <person name="Wiley J.S."/>
        </authorList>
    </citation>
    <scope>FUNCTION</scope>
</reference>
<reference key="16">
    <citation type="journal article" date="2014" name="J. Proteomics">
        <title>An enzyme assisted RP-RPLC approach for in-depth analysis of human liver phosphoproteome.</title>
        <authorList>
            <person name="Bian Y."/>
            <person name="Song C."/>
            <person name="Cheng K."/>
            <person name="Dong M."/>
            <person name="Wang F."/>
            <person name="Huang J."/>
            <person name="Sun D."/>
            <person name="Wang L."/>
            <person name="Ye M."/>
            <person name="Zou H."/>
        </authorList>
    </citation>
    <scope>PHOSPHORYLATION [LARGE SCALE ANALYSIS] AT SER-390</scope>
    <scope>IDENTIFICATION BY MASS SPECTROMETRY [LARGE SCALE ANALYSIS]</scope>
    <source>
        <tissue>Liver</tissue>
    </source>
</reference>
<reference key="17">
    <citation type="journal article" date="2014" name="J. Biol. Chem.">
        <title>Plasma membrane cholesterol as a regulator of human and rodent P2X7 receptor activation and sensitization.</title>
        <authorList>
            <person name="Robinson L.E."/>
            <person name="Shridar M."/>
            <person name="Smith P."/>
            <person name="Murrell-Lagnado R.D."/>
        </authorList>
    </citation>
    <scope>FUNCTION</scope>
    <scope>ACTIVITY REGULATION</scope>
</reference>
<reference key="18">
    <citation type="journal article" date="2016" name="Nat. Commun.">
        <title>Neutrophil P2X7 receptors mediate NLRP3 inflammasome-dependent IL-1beta secretion in response to ATP.</title>
        <authorList>
            <person name="Karmakar M."/>
            <person name="Katsnelson M.A."/>
            <person name="Dubyak G.R."/>
            <person name="Pearlman E."/>
        </authorList>
    </citation>
    <scope>FUNCTION</scope>
</reference>
<reference key="19">
    <citation type="journal article" date="2017" name="Proc. Natl. Acad. Sci. U.S.A.">
        <title>Localization of the gate and selectivity filter of the full-length P2X7 receptor.</title>
        <authorList>
            <person name="Pippel A."/>
            <person name="Stolz M."/>
            <person name="Woltersdorf R."/>
            <person name="Kless A."/>
            <person name="Schmalzing G."/>
            <person name="Markwardt F."/>
        </authorList>
    </citation>
    <scope>FUNCTION</scope>
</reference>
<reference key="20">
    <citation type="journal article" date="2024" name="Biochem. Biophys. Res. Commun.">
        <title>The P2X7 receptor mediates NADPH transport across the plasma membrane.</title>
        <authorList>
            <person name="Mou Y.J."/>
            <person name="Li F.M."/>
            <person name="Zhang R."/>
            <person name="Sheng R."/>
            <person name="Han R."/>
            <person name="Zhang Z.L."/>
            <person name="Hu L.F."/>
            <person name="Zhao Y.Z."/>
            <person name="Wu J.C."/>
            <person name="Qin Z.H."/>
        </authorList>
    </citation>
    <scope>FUNCTION</scope>
</reference>
<reference key="21">
    <citation type="journal article" date="2024" name="PNAS Nexus">
        <title>Two serial filters control P2X7 cation selectivity, Ser342 in the central pore and lateral acidic residues at the cytoplasmic interface.</title>
        <authorList>
            <person name="Markwardt F."/>
            <person name="Schoen E.C."/>
            <person name="Raycheva M."/>
            <person name="Malisetty A."/>
            <person name="Hawro Yakoob S."/>
            <person name="Berthold M."/>
            <person name="Schmalzing G."/>
        </authorList>
    </citation>
    <scope>FUNCTION</scope>
    <scope>MUTAGENESIS OF GLU-14; SER-342 AND ASP-352</scope>
</reference>
<reference key="22">
    <citation type="journal article" date="2001" name="J. Biol. Chem.">
        <title>A Glu-496 to Ala polymorphism leads to loss of function of the human P2X7 receptor.</title>
        <authorList>
            <person name="Gu B.J."/>
            <person name="Zhang W."/>
            <person name="Worthington R.A."/>
            <person name="Sluyter R."/>
            <person name="Dao-Ung P."/>
            <person name="Petrou S."/>
            <person name="Barden J.A."/>
            <person name="Wiley J.S."/>
        </authorList>
    </citation>
    <scope>VARIANT ALA-496</scope>
</reference>
<reference key="23">
    <citation type="journal article" date="2003" name="J. Biol. Chem.">
        <title>An Ile-568 to Asn polymorphism prevents normal trafficking and function of the human P2X7 receptor.</title>
        <authorList>
            <person name="Wiley J.S."/>
            <person name="Dao-Ung L.P."/>
            <person name="Li C."/>
            <person name="Shemon A.N."/>
            <person name="Gu B.J."/>
            <person name="Smart M.L."/>
            <person name="Fuller S.J."/>
            <person name="Barden J.A."/>
            <person name="Petrou S."/>
            <person name="Sluyter R."/>
        </authorList>
    </citation>
    <scope>CHARACTERIZATION OF VARIANT ASN-568</scope>
</reference>
<reference key="24">
    <citation type="journal article" date="2004" name="J. Biol. Chem.">
        <title>An Arg307 to Gln polymorphism within the ATP-binding site causes loss of function of the human P2X7 receptor.</title>
        <authorList>
            <person name="Gu B.J."/>
            <person name="Sluyter R."/>
            <person name="Skarratt K.K."/>
            <person name="Shemon A.N."/>
            <person name="Dao-Ung L.P."/>
            <person name="Fuller S.J."/>
            <person name="Barden J.A."/>
            <person name="Clarke A.L."/>
            <person name="Petrou S."/>
            <person name="Wiley J.S."/>
        </authorList>
    </citation>
    <scope>CHARACTERIZATION OF VARIANT GLN-307</scope>
</reference>
<reference key="25">
    <citation type="journal article" date="2006" name="Science">
        <title>The consensus coding sequences of human breast and colorectal cancers.</title>
        <authorList>
            <person name="Sjoeblom T."/>
            <person name="Jones S."/>
            <person name="Wood L.D."/>
            <person name="Parsons D.W."/>
            <person name="Lin J."/>
            <person name="Barber T.D."/>
            <person name="Mandelker D."/>
            <person name="Leary R.J."/>
            <person name="Ptak J."/>
            <person name="Silliman N."/>
            <person name="Szabo S."/>
            <person name="Buckhaults P."/>
            <person name="Farrell C."/>
            <person name="Meeh P."/>
            <person name="Markowitz S.D."/>
            <person name="Willis J."/>
            <person name="Dawson D."/>
            <person name="Willson J.K.V."/>
            <person name="Gazdar A.F."/>
            <person name="Hartigan J."/>
            <person name="Wu L."/>
            <person name="Liu C."/>
            <person name="Parmigiani G."/>
            <person name="Park B.H."/>
            <person name="Bachman K.E."/>
            <person name="Papadopoulos N."/>
            <person name="Vogelstein B."/>
            <person name="Kinzler K.W."/>
            <person name="Velculescu V.E."/>
        </authorList>
    </citation>
    <scope>VARIANTS [LARGE SCALE ANALYSIS] SER-25 AND LEU-574</scope>
</reference>
<reference key="26">
    <citation type="journal article" date="2013" name="FASEB J.">
        <title>A rare functional haplotype of the P2RX4 and P2RX7 genes leads to loss of innate phagocytosis and confers increased risk of age-related macular degeneration.</title>
        <authorList>
            <person name="Gu B.J."/>
            <person name="Baird P.N."/>
            <person name="Vessey K.A."/>
            <person name="Skarratt K.K."/>
            <person name="Fletcher E.L."/>
            <person name="Fuller S.J."/>
            <person name="Richardson A.J."/>
            <person name="Guymer R.H."/>
            <person name="Wiley J.S."/>
        </authorList>
    </citation>
    <scope>VARIANTS ALA-76; ARG-150; HIS-155; HIS-270; HIS-276; GLN-307; THR-348; SER-357; ARG-460; ALA-496 AND ASN-568</scope>
    <scope>SUBCELLULAR LOCATION</scope>
    <scope>CHARACTERIZATION OF VARIANT ARG-150</scope>
    <scope>FUNCTION</scope>
</reference>
<reference key="27">
    <citation type="journal article" date="2017" name="Hum. Mutat.">
        <title>Purinergic receptors P2RX4 and P2RX7 in familial multiple sclerosis.</title>
        <authorList>
            <person name="Sadovnick A.D."/>
            <person name="Gu B.J."/>
            <person name="Traboulsee A.L."/>
            <person name="Bernales C.Q."/>
            <person name="Encarnacion M."/>
            <person name="Yee I.M."/>
            <person name="Criscuoli M.G."/>
            <person name="Huang X."/>
            <person name="Ou A."/>
            <person name="Milligan C.J."/>
            <person name="Petrou S."/>
            <person name="Wiley J.S."/>
            <person name="Vilarino-Gueell C."/>
        </authorList>
    </citation>
    <scope>VARIANTS ALA-76; TRP-117; LEU-125; ARG-148; ARG-150; HIS-155; MET-205; HIS-264; HIS-270; HIS-276; HIS-288; GLN-307; THR-348; SER-357; SER-361; VAL-433; ARG-460; ALA-496; GLN-521; ILE-522; VAL-535; GLN-544 AND ASN-568</scope>
    <scope>CHARACTERIZATION OF VARIANTS MET-205 AND SER-361</scope>
    <scope>SUBCELLULAR LOCATION</scope>
    <scope>FUNCTION</scope>
</reference>
<comment type="function">
    <text evidence="2 14 17 18 19 20 21 22 23 24 25 26">ATP-gated nonselective transmembrane cation channel that requires high millimolar concentrations of ATP for activation (PubMed:17483156, PubMed:25281740, PubMed:9038151). Upon ATP binding, it rapidly opens to allow the influx of small cations Na(+) and Ca(2+), and the K(+) efflux (PubMed:17483156, PubMed:20453110, PubMed:28235784, PubMed:39262850). Also has the ability to form a large pore in the cell membrane, allowing the passage of large cationic molecules (PubMed:17483156). In microglia, may mediate NADPH transport across the plasma membrane (PubMed:39142135). In immune cells, P2RX7 acts as a molecular sensor in pathological inflammatory states by detecting and responding to high local concentrations of extracellar ATP. In microglial cells, P2RX7 activation leads to the release of pro-inflammatory cytokines, such as IL-1beta and IL-18, through the activation of the NLRP3 inflammasome and caspase-1 (PubMed:26877061). Cooperates with KCNK6 to activate NLRP3 inflammasome (By similarity). Activates death pathways leading to apoptosis and autophagy (PubMed:21821797, PubMed:23303206, PubMed:28326637). Activates death pathways leading to pyroptosis (By similarity).</text>
</comment>
<comment type="function">
    <molecule>Isoform B</molecule>
    <text evidence="17">Shows ion channel activity but no macropore function.</text>
</comment>
<comment type="function">
    <molecule>Isoform H</molecule>
    <text evidence="10">Non-functional channel.</text>
</comment>
<comment type="function">
    <molecule>Isoform J</molecule>
    <text evidence="12">Non-functional channel.</text>
</comment>
<comment type="catalytic activity">
    <reaction evidence="17">
        <text>Ca(2+)(in) = Ca(2+)(out)</text>
        <dbReference type="Rhea" id="RHEA:29671"/>
        <dbReference type="ChEBI" id="CHEBI:29108"/>
    </reaction>
</comment>
<comment type="catalytic activity">
    <reaction evidence="14">
        <text>K(+)(in) = K(+)(out)</text>
        <dbReference type="Rhea" id="RHEA:29463"/>
        <dbReference type="ChEBI" id="CHEBI:29103"/>
    </reaction>
</comment>
<comment type="catalytic activity">
    <reaction evidence="14">
        <text>Na(+)(in) = Na(+)(out)</text>
        <dbReference type="Rhea" id="RHEA:34963"/>
        <dbReference type="ChEBI" id="CHEBI:29101"/>
    </reaction>
</comment>
<comment type="activity regulation">
    <text evidence="1 14 17 20">Activated by high extracellular ATP levels (0.1-2.5 mM) (PubMed:17483156). The synthetic analog 2'(3')-O-(4-benzoylbenzoyl)ATP (BzATP) acts as a potent agonist (PubMed:20453110, PubMed:25281740). Does not undergo desensitization, instead, undergoes a facilitation process where currents progressively increase with repetitive or prolonged agonist application (PubMed:20453110, PubMed:25281740). Palmitoylation prevents channel desensitization (By similarity). The permeability of the P2RX7 channel is modulated by the amount of cholesterol in the plasma membrane (PubMed:25281740).</text>
</comment>
<comment type="subunit">
    <text evidence="4 5 17">Homotrimers (PubMed:20453110). Interacts with LAMA3, ITGB2, ACTB, ACTN4, SVIL, MPP3, HSPA1, HSPCB, HSPA8, PIK230 and PTPRB (PubMed:11707406). Interacts (via C-terminus) with EMP2 (PubMed:12107182). Interacts with isoform B; this interaction potentiates P2RX7 responses (PubMed:20453110).</text>
</comment>
<comment type="interaction">
    <interactant intactId="EBI-1753251">
        <id>Q99572</id>
    </interactant>
    <interactant intactId="EBI-3867333">
        <id>A8MQ03</id>
        <label>CYSRT1</label>
    </interactant>
    <organismsDiffer>false</organismsDiffer>
    <experiments>3</experiments>
</comment>
<comment type="interaction">
    <interactant intactId="EBI-1753251">
        <id>Q99572</id>
    </interactant>
    <interactant intactId="EBI-743414">
        <id>O95967</id>
        <label>EFEMP2</label>
    </interactant>
    <organismsDiffer>false</organismsDiffer>
    <experiments>3</experiments>
</comment>
<comment type="interaction">
    <interactant intactId="EBI-1753251">
        <id>Q99572</id>
    </interactant>
    <interactant intactId="EBI-7116203">
        <id>O75031</id>
        <label>HSF2BP</label>
    </interactant>
    <organismsDiffer>false</organismsDiffer>
    <experiments>3</experiments>
</comment>
<comment type="interaction">
    <interactant intactId="EBI-1753251">
        <id>Q99572</id>
    </interactant>
    <interactant intactId="EBI-948001">
        <id>Q15323</id>
        <label>KRT31</label>
    </interactant>
    <organismsDiffer>false</organismsDiffer>
    <experiments>6</experiments>
</comment>
<comment type="interaction">
    <interactant intactId="EBI-1753251">
        <id>Q99572</id>
    </interactant>
    <interactant intactId="EBI-1047093">
        <id>O76011</id>
        <label>KRT34</label>
    </interactant>
    <organismsDiffer>false</organismsDiffer>
    <experiments>3</experiments>
</comment>
<comment type="interaction">
    <interactant intactId="EBI-1753251">
        <id>Q99572</id>
    </interactant>
    <interactant intactId="EBI-10171774">
        <id>P60410</id>
        <label>KRTAP10-8</label>
    </interactant>
    <organismsDiffer>false</organismsDiffer>
    <experiments>3</experiments>
</comment>
<comment type="interaction">
    <interactant intactId="EBI-1753251">
        <id>Q99572</id>
    </interactant>
    <interactant intactId="EBI-22310682">
        <id>P0DPK4</id>
        <label>NOTCH2NLC</label>
    </interactant>
    <organismsDiffer>false</organismsDiffer>
    <experiments>3</experiments>
</comment>
<comment type="interaction">
    <interactant intactId="EBI-1753251">
        <id>Q99572</id>
    </interactant>
    <interactant intactId="EBI-742388">
        <id>Q9H8W4</id>
        <label>PLEKHF2</label>
    </interactant>
    <organismsDiffer>false</organismsDiffer>
    <experiments>3</experiments>
</comment>
<comment type="interaction">
    <interactant intactId="EBI-1753251">
        <id>Q99572</id>
    </interactant>
    <interactant intactId="EBI-719493">
        <id>P14373</id>
        <label>TRIM27</label>
    </interactant>
    <organismsDiffer>false</organismsDiffer>
    <experiments>3</experiments>
</comment>
<comment type="interaction">
    <interactant intactId="EBI-1753251">
        <id>Q99572</id>
    </interactant>
    <interactant intactId="EBI-625509">
        <id>Q8N720</id>
        <label>ZNF655</label>
    </interactant>
    <organismsDiffer>false</organismsDiffer>
    <experiments>3</experiments>
</comment>
<comment type="subcellular location">
    <subcellularLocation>
        <location evidence="5 19 23">Cell membrane</location>
        <topology evidence="1">Multi-pass membrane protein</topology>
    </subcellularLocation>
</comment>
<comment type="alternative products">
    <event type="alternative splicing"/>
    <isoform>
        <id>Q99572-1</id>
        <name>A</name>
        <sequence type="displayed"/>
    </isoform>
    <isoform>
        <id>Q99572-2</id>
        <name evidence="31">B</name>
        <name>Delta-C</name>
        <name>cytoplasmic tail deleted</name>
        <sequence type="described" ref="VSP_047784 VSP_047785"/>
    </isoform>
    <isoform>
        <id>Q99572-3</id>
        <name evidence="31">C</name>
        <sequence type="described" ref="VSP_047781 VSP_047782"/>
    </isoform>
    <isoform>
        <id>Q99572-4</id>
        <name evidence="31">D</name>
        <sequence type="described" ref="VSP_047777 VSP_047780"/>
    </isoform>
    <isoform>
        <id>Q99572-5</id>
        <name evidence="31">E</name>
        <sequence type="described" ref="VSP_047783 VSP_047784 VSP_047785"/>
    </isoform>
    <isoform>
        <id>Q99572-6</id>
        <name evidence="31">F</name>
        <sequence type="described" ref="VSP_047778 VSP_047779"/>
    </isoform>
    <isoform>
        <id>Q99572-7</id>
        <name evidence="31">G</name>
        <sequence type="described" ref="VSP_047776 VSP_047784 VSP_047785"/>
    </isoform>
    <isoform>
        <id>Q99572-8</id>
        <name evidence="31">H</name>
        <name>Delta-TM1</name>
        <sequence type="described" ref="VSP_047776"/>
    </isoform>
    <isoform>
        <id>Q99572-9</id>
        <name evidence="32">J</name>
        <name evidence="33">Isoform P</name>
        <sequence type="described" ref="VSP_062514 VSP_062515"/>
    </isoform>
</comment>
<comment type="tissue specificity">
    <text evidence="10">Widely expressed with highest levels in brain and immune tissues.</text>
</comment>
<comment type="tissue specificity">
    <molecule>Isoform B</molecule>
    <text evidence="10">Predominant form in many tissues.</text>
</comment>
<comment type="domain">
    <text evidence="1">Contains two P2RX7-specific cytoplasmic domains, the C-cysteines (C-cys) anchor and the cytoplasmic ballast. Palmitoylation of the cytoplasmic C-cys anchor prevents receptor desensitization. The cytoplasmic ballast contains a zinc ion complex and a guanosine nucleotide binding site.</text>
</comment>
<comment type="domain">
    <text evidence="25">The ion selectivity is determined by two sequential filters: a dynamic tri-Ser-342 size filter and three conformationally static cation filters.</text>
</comment>
<comment type="PTM">
    <text evidence="4">Phosphorylation results in its inactivation.</text>
</comment>
<comment type="PTM">
    <text evidence="2">ADP-ribosylation at Arg-125 is necessary and sufficient to activate P2RX7 and gate the channel.</text>
</comment>
<comment type="PTM">
    <text evidence="1 15">Palmitoylation of several cysteines in the C-terminal cytoplasmic tail is required for efficient localization to cell surface (PubMed:18971257). Palmitoylation prevents channel desensitization by physically anchoring the palmitoylated groups to the membrane (By similarity).</text>
</comment>
<comment type="similarity">
    <text evidence="34">Belongs to the P2X receptor family.</text>
</comment>
<comment type="caution">
    <text evidence="1 22">It has been proposed that P2RX7 forms a dilated pore after prolonged exposure to ATP, permitting passage of large organic cations such as NMDG(+) (By similarity). Two mechanisms have been proposed to explain this macropore formation: progressive dilatation and/or the recruitment of an accessory pore-forming molecule (By similarity). However, strong evidences now indicates that P2RX7 channel itself has the ability to form a large-conductance pore in the absence of any significant dilatation (PubMed:28235784). From its initial activation, the P2RX7 channel allows large cationic molecules to pass through, although at a much slower rate than smaller cations such as Na(+), K(+), and Ca(2+) (PubMed:28235784).</text>
</comment>
<comment type="online information" name="Atlas of Genetics and Cytogenetics in Oncology and Haematology">
    <link uri="https://atlasgeneticsoncology.org/gene/41623/P2RX7"/>
</comment>
<comment type="online information" name="Wikipedia">
    <link uri="https://en.wikipedia.org/wiki/P2X_receptor"/>
    <text>P2X receptor entry</text>
</comment>
<comment type="online information" name="Wikipedia">
    <link uri="https://en.wikipedia.org/wiki/P2RX7"/>
    <text>P2RX7 entry</text>
</comment>
<organism>
    <name type="scientific">Homo sapiens</name>
    <name type="common">Human</name>
    <dbReference type="NCBI Taxonomy" id="9606"/>
    <lineage>
        <taxon>Eukaryota</taxon>
        <taxon>Metazoa</taxon>
        <taxon>Chordata</taxon>
        <taxon>Craniata</taxon>
        <taxon>Vertebrata</taxon>
        <taxon>Euteleostomi</taxon>
        <taxon>Mammalia</taxon>
        <taxon>Eutheria</taxon>
        <taxon>Euarchontoglires</taxon>
        <taxon>Primates</taxon>
        <taxon>Haplorrhini</taxon>
        <taxon>Catarrhini</taxon>
        <taxon>Hominidae</taxon>
        <taxon>Homo</taxon>
    </lineage>
</organism>